<organism>
    <name type="scientific">Homo sapiens</name>
    <name type="common">Human</name>
    <dbReference type="NCBI Taxonomy" id="9606"/>
    <lineage>
        <taxon>Eukaryota</taxon>
        <taxon>Metazoa</taxon>
        <taxon>Chordata</taxon>
        <taxon>Craniata</taxon>
        <taxon>Vertebrata</taxon>
        <taxon>Euteleostomi</taxon>
        <taxon>Mammalia</taxon>
        <taxon>Eutheria</taxon>
        <taxon>Euarchontoglires</taxon>
        <taxon>Primates</taxon>
        <taxon>Haplorrhini</taxon>
        <taxon>Catarrhini</taxon>
        <taxon>Hominidae</taxon>
        <taxon>Homo</taxon>
    </lineage>
</organism>
<keyword id="KW-0002">3D-structure</keyword>
<keyword id="KW-0007">Acetylation</keyword>
<keyword id="KW-0025">Alternative splicing</keyword>
<keyword id="KW-0130">Cell adhesion</keyword>
<keyword id="KW-0965">Cell junction</keyword>
<keyword id="KW-0963">Cytoplasm</keyword>
<keyword id="KW-0206">Cytoskeleton</keyword>
<keyword id="KW-0440">LIM domain</keyword>
<keyword id="KW-0479">Metal-binding</keyword>
<keyword id="KW-0597">Phosphoprotein</keyword>
<keyword id="KW-1267">Proteomics identification</keyword>
<keyword id="KW-1185">Reference proteome</keyword>
<keyword id="KW-0677">Repeat</keyword>
<keyword id="KW-0862">Zinc</keyword>
<dbReference type="EMBL" id="U14588">
    <property type="protein sequence ID" value="AAC50104.1"/>
    <property type="molecule type" value="mRNA"/>
</dbReference>
<dbReference type="EMBL" id="U87946">
    <property type="protein sequence ID" value="AAD00648.1"/>
    <property type="molecule type" value="Genomic_DNA"/>
</dbReference>
<dbReference type="EMBL" id="U87941">
    <property type="protein sequence ID" value="AAD00648.1"/>
    <property type="status" value="JOINED"/>
    <property type="molecule type" value="Genomic_DNA"/>
</dbReference>
<dbReference type="EMBL" id="U87942">
    <property type="protein sequence ID" value="AAD00648.1"/>
    <property type="status" value="JOINED"/>
    <property type="molecule type" value="Genomic_DNA"/>
</dbReference>
<dbReference type="EMBL" id="U87943">
    <property type="protein sequence ID" value="AAD00648.1"/>
    <property type="status" value="JOINED"/>
    <property type="molecule type" value="Genomic_DNA"/>
</dbReference>
<dbReference type="EMBL" id="U87944">
    <property type="protein sequence ID" value="AAD00648.1"/>
    <property type="status" value="JOINED"/>
    <property type="molecule type" value="Genomic_DNA"/>
</dbReference>
<dbReference type="EMBL" id="U87945">
    <property type="protein sequence ID" value="AAD00648.1"/>
    <property type="status" value="JOINED"/>
    <property type="molecule type" value="Genomic_DNA"/>
</dbReference>
<dbReference type="EMBL" id="D86862">
    <property type="protein sequence ID" value="BAA18997.1"/>
    <property type="molecule type" value="mRNA"/>
</dbReference>
<dbReference type="EMBL" id="D86863">
    <property type="protein sequence ID" value="BAA18998.1"/>
    <property type="molecule type" value="mRNA"/>
</dbReference>
<dbReference type="EMBL" id="AK314204">
    <property type="protein sequence ID" value="BAG36880.1"/>
    <property type="molecule type" value="mRNA"/>
</dbReference>
<dbReference type="EMBL" id="BX648777">
    <property type="protein sequence ID" value="CAI46024.1"/>
    <property type="molecule type" value="mRNA"/>
</dbReference>
<dbReference type="EMBL" id="AC004263">
    <property type="protein sequence ID" value="AAC05175.1"/>
    <property type="molecule type" value="Genomic_DNA"/>
</dbReference>
<dbReference type="EMBL" id="BC136787">
    <property type="protein sequence ID" value="AAI36788.1"/>
    <property type="molecule type" value="mRNA"/>
</dbReference>
<dbReference type="EMBL" id="BC136794">
    <property type="protein sequence ID" value="AAI36795.1"/>
    <property type="molecule type" value="mRNA"/>
</dbReference>
<dbReference type="EMBL" id="BC144410">
    <property type="protein sequence ID" value="AAI44411.1"/>
    <property type="molecule type" value="mRNA"/>
</dbReference>
<dbReference type="CCDS" id="CCDS44996.1">
    <molecule id="P49023-2"/>
</dbReference>
<dbReference type="CCDS" id="CCDS44997.1">
    <molecule id="P49023-1"/>
</dbReference>
<dbReference type="CCDS" id="CCDS44998.1">
    <molecule id="P49023-4"/>
</dbReference>
<dbReference type="CCDS" id="CCDS58281.1">
    <molecule id="P49023-3"/>
</dbReference>
<dbReference type="PIR" id="A55933">
    <property type="entry name" value="A55933"/>
</dbReference>
<dbReference type="RefSeq" id="NP_001074324.1">
    <molecule id="P49023-1"/>
    <property type="nucleotide sequence ID" value="NM_001080855.3"/>
</dbReference>
<dbReference type="RefSeq" id="NP_001230685.1">
    <molecule id="P49023-3"/>
    <property type="nucleotide sequence ID" value="NM_001243756.2"/>
</dbReference>
<dbReference type="RefSeq" id="NP_002850.2">
    <molecule id="P49023-2"/>
    <property type="nucleotide sequence ID" value="NM_002859.4"/>
</dbReference>
<dbReference type="RefSeq" id="NP_079433.3">
    <molecule id="P49023-4"/>
    <property type="nucleotide sequence ID" value="NM_025157.4"/>
</dbReference>
<dbReference type="RefSeq" id="XP_016875232.1">
    <property type="nucleotide sequence ID" value="XM_017019743.1"/>
</dbReference>
<dbReference type="PDB" id="1OW6">
    <property type="method" value="X-ray"/>
    <property type="resolution" value="2.35 A"/>
    <property type="chains" value="D/F=262-274"/>
</dbReference>
<dbReference type="PDB" id="1OW7">
    <property type="method" value="X-ray"/>
    <property type="resolution" value="2.60 A"/>
    <property type="chains" value="D/E/F=262-274"/>
</dbReference>
<dbReference type="PDB" id="1OW8">
    <property type="method" value="X-ray"/>
    <property type="resolution" value="2.85 A"/>
    <property type="chains" value="D/F=141-153"/>
</dbReference>
<dbReference type="PDB" id="2K2R">
    <property type="method" value="NMR"/>
    <property type="chains" value="B=3-12"/>
</dbReference>
<dbReference type="PDB" id="2O9V">
    <property type="method" value="X-ray"/>
    <property type="resolution" value="1.63 A"/>
    <property type="chains" value="B=45-54"/>
</dbReference>
<dbReference type="PDB" id="2VZD">
    <property type="method" value="X-ray"/>
    <property type="resolution" value="2.10 A"/>
    <property type="chains" value="C/D=1-20"/>
</dbReference>
<dbReference type="PDB" id="2VZG">
    <property type="method" value="X-ray"/>
    <property type="resolution" value="1.80 A"/>
    <property type="chains" value="A=141-160"/>
</dbReference>
<dbReference type="PDB" id="2VZI">
    <property type="method" value="X-ray"/>
    <property type="resolution" value="2.20 A"/>
    <property type="chains" value="A=262-277"/>
</dbReference>
<dbReference type="PDB" id="3GM1">
    <property type="method" value="X-ray"/>
    <property type="resolution" value="2.95 A"/>
    <property type="chains" value="C/D/E/F=262-274"/>
</dbReference>
<dbReference type="PDB" id="3PY7">
    <property type="method" value="X-ray"/>
    <property type="resolution" value="2.29 A"/>
    <property type="chains" value="A=1-10"/>
</dbReference>
<dbReference type="PDB" id="3RQE">
    <property type="method" value="X-ray"/>
    <property type="resolution" value="2.80 A"/>
    <property type="chains" value="E=2-15"/>
</dbReference>
<dbReference type="PDB" id="3RQF">
    <property type="method" value="X-ray"/>
    <property type="resolution" value="2.70 A"/>
    <property type="chains" value="E=141-153"/>
</dbReference>
<dbReference type="PDB" id="3RQG">
    <property type="method" value="X-ray"/>
    <property type="resolution" value="2.50 A"/>
    <property type="chains" value="E=262-274"/>
</dbReference>
<dbReference type="PDB" id="3U3F">
    <property type="method" value="X-ray"/>
    <property type="resolution" value="3.10 A"/>
    <property type="chains" value="E/F/G/H/I/J=261-277"/>
</dbReference>
<dbReference type="PDB" id="4EDN">
    <property type="method" value="X-ray"/>
    <property type="resolution" value="2.90 A"/>
    <property type="chains" value="K/L/M/N/O/P/Q=1-20"/>
</dbReference>
<dbReference type="PDB" id="4R32">
    <property type="method" value="X-ray"/>
    <property type="resolution" value="3.70 A"/>
    <property type="chains" value="B/C=139-160"/>
</dbReference>
<dbReference type="PDB" id="4XGZ">
    <property type="method" value="X-ray"/>
    <property type="resolution" value="2.50 A"/>
    <property type="chains" value="a/c/e/g/h/j/m/o/q/s/u/w=141-159"/>
</dbReference>
<dbReference type="PDB" id="4XH2">
    <property type="method" value="X-ray"/>
    <property type="resolution" value="2.00 A"/>
    <property type="chains" value="a/c/e/g/h/j=261-275"/>
</dbReference>
<dbReference type="PDB" id="5UWH">
    <property type="method" value="X-ray"/>
    <property type="resolution" value="2.26 A"/>
    <property type="chains" value="D=264-277"/>
</dbReference>
<dbReference type="PDB" id="6IUI">
    <property type="method" value="X-ray"/>
    <property type="resolution" value="2.60 A"/>
    <property type="chains" value="C/D=261-280"/>
</dbReference>
<dbReference type="PDB" id="6PW8">
    <property type="method" value="X-ray"/>
    <property type="resolution" value="1.95 A"/>
    <property type="chains" value="B=141-153"/>
</dbReference>
<dbReference type="PDB" id="6U4M">
    <property type="method" value="NMR"/>
    <property type="chains" value="A=527-591"/>
</dbReference>
<dbReference type="PDB" id="6U4N">
    <property type="method" value="NMR"/>
    <property type="chains" value="B=527-591"/>
</dbReference>
<dbReference type="PDB" id="7QB0">
    <property type="method" value="NMR"/>
    <property type="chains" value="A=414-533"/>
</dbReference>
<dbReference type="PDBsum" id="1OW6"/>
<dbReference type="PDBsum" id="1OW7"/>
<dbReference type="PDBsum" id="1OW8"/>
<dbReference type="PDBsum" id="2K2R"/>
<dbReference type="PDBsum" id="2O9V"/>
<dbReference type="PDBsum" id="2VZD"/>
<dbReference type="PDBsum" id="2VZG"/>
<dbReference type="PDBsum" id="2VZI"/>
<dbReference type="PDBsum" id="3GM1"/>
<dbReference type="PDBsum" id="3PY7"/>
<dbReference type="PDBsum" id="3RQE"/>
<dbReference type="PDBsum" id="3RQF"/>
<dbReference type="PDBsum" id="3RQG"/>
<dbReference type="PDBsum" id="3U3F"/>
<dbReference type="PDBsum" id="4EDN"/>
<dbReference type="PDBsum" id="4R32"/>
<dbReference type="PDBsum" id="4XGZ"/>
<dbReference type="PDBsum" id="4XH2"/>
<dbReference type="PDBsum" id="5UWH"/>
<dbReference type="PDBsum" id="6IUI"/>
<dbReference type="PDBsum" id="6PW8"/>
<dbReference type="PDBsum" id="6U4M"/>
<dbReference type="PDBsum" id="6U4N"/>
<dbReference type="PDBsum" id="7QB0"/>
<dbReference type="SMR" id="P49023"/>
<dbReference type="BioGRID" id="111787">
    <property type="interactions" value="321"/>
</dbReference>
<dbReference type="CORUM" id="P49023"/>
<dbReference type="DIP" id="DIP-33851N"/>
<dbReference type="ELM" id="P49023"/>
<dbReference type="FunCoup" id="P49023">
    <property type="interactions" value="781"/>
</dbReference>
<dbReference type="IntAct" id="P49023">
    <property type="interactions" value="138"/>
</dbReference>
<dbReference type="MINT" id="P49023"/>
<dbReference type="STRING" id="9606.ENSP00000267257"/>
<dbReference type="ChEMBL" id="CHEMBL5715"/>
<dbReference type="GlyCosmos" id="P49023">
    <property type="glycosylation" value="2 sites, 1 glycan"/>
</dbReference>
<dbReference type="GlyGen" id="P49023">
    <property type="glycosylation" value="5 sites, 1 O-linked glycan (4 sites)"/>
</dbReference>
<dbReference type="iPTMnet" id="P49023"/>
<dbReference type="MetOSite" id="P49023"/>
<dbReference type="PhosphoSitePlus" id="P49023"/>
<dbReference type="SwissPalm" id="P49023"/>
<dbReference type="BioMuta" id="PXN"/>
<dbReference type="DMDM" id="317373486"/>
<dbReference type="jPOST" id="P49023"/>
<dbReference type="MassIVE" id="P49023"/>
<dbReference type="PaxDb" id="9606-ENSP00000267257"/>
<dbReference type="PeptideAtlas" id="P49023"/>
<dbReference type="ProteomicsDB" id="55957">
    <molecule id="P49023-1"/>
</dbReference>
<dbReference type="ProteomicsDB" id="55958">
    <molecule id="P49023-2"/>
</dbReference>
<dbReference type="ProteomicsDB" id="55959">
    <molecule id="P49023-3"/>
</dbReference>
<dbReference type="ProteomicsDB" id="55960">
    <molecule id="P49023-4"/>
</dbReference>
<dbReference type="Pumba" id="P49023"/>
<dbReference type="TopDownProteomics" id="P49023-2">
    <molecule id="P49023-2"/>
</dbReference>
<dbReference type="TopDownProteomics" id="P49023-3">
    <molecule id="P49023-3"/>
</dbReference>
<dbReference type="ABCD" id="P49023">
    <property type="antibodies" value="2 sequenced antibodies"/>
</dbReference>
<dbReference type="Antibodypedia" id="3546">
    <property type="antibodies" value="1653 antibodies from 48 providers"/>
</dbReference>
<dbReference type="DNASU" id="5829"/>
<dbReference type="Ensembl" id="ENST00000228307.11">
    <molecule id="P49023-1"/>
    <property type="protein sequence ID" value="ENSP00000228307.7"/>
    <property type="gene ID" value="ENSG00000089159.17"/>
</dbReference>
<dbReference type="Ensembl" id="ENST00000267257.11">
    <molecule id="P49023-3"/>
    <property type="protein sequence ID" value="ENSP00000267257.7"/>
    <property type="gene ID" value="ENSG00000089159.17"/>
</dbReference>
<dbReference type="Ensembl" id="ENST00000424649.6">
    <molecule id="P49023-2"/>
    <property type="protein sequence ID" value="ENSP00000391283.2"/>
    <property type="gene ID" value="ENSG00000089159.17"/>
</dbReference>
<dbReference type="Ensembl" id="ENST00000458477.6">
    <molecule id="P49023-4"/>
    <property type="protein sequence ID" value="ENSP00000395536.2"/>
    <property type="gene ID" value="ENSG00000089159.17"/>
</dbReference>
<dbReference type="GeneID" id="5829"/>
<dbReference type="KEGG" id="hsa:5829"/>
<dbReference type="UCSC" id="uc001txt.4">
    <molecule id="P49023-1"/>
    <property type="organism name" value="human"/>
</dbReference>
<dbReference type="AGR" id="HGNC:9718"/>
<dbReference type="CTD" id="5829"/>
<dbReference type="DisGeNET" id="5829"/>
<dbReference type="GeneCards" id="PXN"/>
<dbReference type="HGNC" id="HGNC:9718">
    <property type="gene designation" value="PXN"/>
</dbReference>
<dbReference type="HPA" id="ENSG00000089159">
    <property type="expression patterns" value="Low tissue specificity"/>
</dbReference>
<dbReference type="MIM" id="602505">
    <property type="type" value="gene"/>
</dbReference>
<dbReference type="neXtProt" id="NX_P49023"/>
<dbReference type="OpenTargets" id="ENSG00000089159"/>
<dbReference type="PharmGKB" id="PA34062"/>
<dbReference type="VEuPathDB" id="HostDB:ENSG00000089159"/>
<dbReference type="eggNOG" id="KOG1703">
    <property type="taxonomic scope" value="Eukaryota"/>
</dbReference>
<dbReference type="GeneTree" id="ENSGT00940000158897"/>
<dbReference type="HOGENOM" id="CLU_001357_1_2_1"/>
<dbReference type="InParanoid" id="P49023"/>
<dbReference type="OrthoDB" id="15567at2759"/>
<dbReference type="PAN-GO" id="P49023">
    <property type="GO annotations" value="7 GO annotations based on evolutionary models"/>
</dbReference>
<dbReference type="PhylomeDB" id="P49023"/>
<dbReference type="TreeFam" id="TF314113"/>
<dbReference type="PathwayCommons" id="P49023"/>
<dbReference type="Reactome" id="R-HSA-180292">
    <property type="pathway name" value="GAB1 signalosome"/>
</dbReference>
<dbReference type="Reactome" id="R-HSA-4420097">
    <property type="pathway name" value="VEGFA-VEGFR2 Pathway"/>
</dbReference>
<dbReference type="Reactome" id="R-HSA-445355">
    <property type="pathway name" value="Smooth Muscle Contraction"/>
</dbReference>
<dbReference type="Reactome" id="R-HSA-446343">
    <property type="pathway name" value="Localization of the PINCH-ILK-PARVIN complex to focal adhesions"/>
</dbReference>
<dbReference type="Reactome" id="R-HSA-446388">
    <property type="pathway name" value="Regulation of cytoskeletal remodeling and cell spreading by IPP complex components"/>
</dbReference>
<dbReference type="Reactome" id="R-HSA-8849471">
    <property type="pathway name" value="PTK6 Regulates RHO GTPases, RAS GTPase and MAP kinases"/>
</dbReference>
<dbReference type="Reactome" id="R-HSA-9926550">
    <property type="pathway name" value="Regulation of MITF-M-dependent genes involved in extracellular matrix, focal adhesion and epithelial-to-mesenchymal transition"/>
</dbReference>
<dbReference type="SignaLink" id="P49023"/>
<dbReference type="SIGNOR" id="P49023"/>
<dbReference type="BioGRID-ORCS" id="5829">
    <property type="hits" value="174 hits in 1158 CRISPR screens"/>
</dbReference>
<dbReference type="CD-CODE" id="8C2F96ED">
    <property type="entry name" value="Centrosome"/>
</dbReference>
<dbReference type="ChiTaRS" id="PXN">
    <property type="organism name" value="human"/>
</dbReference>
<dbReference type="EvolutionaryTrace" id="P49023"/>
<dbReference type="GeneWiki" id="Paxillin"/>
<dbReference type="GenomeRNAi" id="5829"/>
<dbReference type="Pharos" id="P49023">
    <property type="development level" value="Tbio"/>
</dbReference>
<dbReference type="PRO" id="PR:P49023"/>
<dbReference type="Proteomes" id="UP000005640">
    <property type="component" value="Chromosome 12"/>
</dbReference>
<dbReference type="RNAct" id="P49023">
    <property type="molecule type" value="protein"/>
</dbReference>
<dbReference type="Bgee" id="ENSG00000089159">
    <property type="expression patterns" value="Expressed in granulocyte and 181 other cell types or tissues"/>
</dbReference>
<dbReference type="ExpressionAtlas" id="P49023">
    <property type="expression patterns" value="baseline and differential"/>
</dbReference>
<dbReference type="GO" id="GO:0005938">
    <property type="term" value="C:cell cortex"/>
    <property type="evidence" value="ECO:0007669"/>
    <property type="project" value="UniProtKB-SubCell"/>
</dbReference>
<dbReference type="GO" id="GO:0005911">
    <property type="term" value="C:cell-cell junction"/>
    <property type="evidence" value="ECO:0000315"/>
    <property type="project" value="ARUK-UCL"/>
</dbReference>
<dbReference type="GO" id="GO:0005829">
    <property type="term" value="C:cytosol"/>
    <property type="evidence" value="ECO:0000314"/>
    <property type="project" value="HPA"/>
</dbReference>
<dbReference type="GO" id="GO:0005925">
    <property type="term" value="C:focal adhesion"/>
    <property type="evidence" value="ECO:0000314"/>
    <property type="project" value="HPA"/>
</dbReference>
<dbReference type="GO" id="GO:0030027">
    <property type="term" value="C:lamellipodium"/>
    <property type="evidence" value="ECO:0000314"/>
    <property type="project" value="BHF-UCL"/>
</dbReference>
<dbReference type="GO" id="GO:0005875">
    <property type="term" value="C:microtubule associated complex"/>
    <property type="evidence" value="ECO:0000304"/>
    <property type="project" value="ProtInc"/>
</dbReference>
<dbReference type="GO" id="GO:0005886">
    <property type="term" value="C:plasma membrane"/>
    <property type="evidence" value="ECO:0000314"/>
    <property type="project" value="UniProtKB"/>
</dbReference>
<dbReference type="GO" id="GO:0001725">
    <property type="term" value="C:stress fiber"/>
    <property type="evidence" value="ECO:0000314"/>
    <property type="project" value="UniProtKB"/>
</dbReference>
<dbReference type="GO" id="GO:0008013">
    <property type="term" value="F:beta-catenin binding"/>
    <property type="evidence" value="ECO:0000353"/>
    <property type="project" value="UniProtKB"/>
</dbReference>
<dbReference type="GO" id="GO:0046872">
    <property type="term" value="F:metal ion binding"/>
    <property type="evidence" value="ECO:0007669"/>
    <property type="project" value="UniProtKB-KW"/>
</dbReference>
<dbReference type="GO" id="GO:0038191">
    <property type="term" value="F:neuropilin binding"/>
    <property type="evidence" value="ECO:0000353"/>
    <property type="project" value="BHF-UCL"/>
</dbReference>
<dbReference type="GO" id="GO:0019903">
    <property type="term" value="F:protein phosphatase binding"/>
    <property type="evidence" value="ECO:0000353"/>
    <property type="project" value="BHF-UCL"/>
</dbReference>
<dbReference type="GO" id="GO:0017166">
    <property type="term" value="F:vinculin binding"/>
    <property type="evidence" value="ECO:0000353"/>
    <property type="project" value="UniProtKB"/>
</dbReference>
<dbReference type="GO" id="GO:0007155">
    <property type="term" value="P:cell adhesion"/>
    <property type="evidence" value="ECO:0000303"/>
    <property type="project" value="ProtInc"/>
</dbReference>
<dbReference type="GO" id="GO:0016477">
    <property type="term" value="P:cell migration"/>
    <property type="evidence" value="ECO:0000315"/>
    <property type="project" value="BHF-UCL"/>
</dbReference>
<dbReference type="GO" id="GO:0034614">
    <property type="term" value="P:cellular response to reactive oxygen species"/>
    <property type="evidence" value="ECO:0000270"/>
    <property type="project" value="BHF-UCL"/>
</dbReference>
<dbReference type="GO" id="GO:0043542">
    <property type="term" value="P:endothelial cell migration"/>
    <property type="evidence" value="ECO:0000315"/>
    <property type="project" value="BHF-UCL"/>
</dbReference>
<dbReference type="GO" id="GO:0060396">
    <property type="term" value="P:growth hormone receptor signaling pathway"/>
    <property type="evidence" value="ECO:0000314"/>
    <property type="project" value="BHF-UCL"/>
</dbReference>
<dbReference type="GO" id="GO:0051496">
    <property type="term" value="P:positive regulation of stress fiber assembly"/>
    <property type="evidence" value="ECO:0000315"/>
    <property type="project" value="BHF-UCL"/>
</dbReference>
<dbReference type="GO" id="GO:0007172">
    <property type="term" value="P:signal complex assembly"/>
    <property type="evidence" value="ECO:0000304"/>
    <property type="project" value="ProtInc"/>
</dbReference>
<dbReference type="GO" id="GO:0007165">
    <property type="term" value="P:signal transduction"/>
    <property type="evidence" value="ECO:0000304"/>
    <property type="project" value="ProtInc"/>
</dbReference>
<dbReference type="GO" id="GO:0034446">
    <property type="term" value="P:substrate adhesion-dependent cell spreading"/>
    <property type="evidence" value="ECO:0000318"/>
    <property type="project" value="GO_Central"/>
</dbReference>
<dbReference type="GO" id="GO:0007179">
    <property type="term" value="P:transforming growth factor beta receptor signaling pathway"/>
    <property type="evidence" value="ECO:0000314"/>
    <property type="project" value="UniProtKB"/>
</dbReference>
<dbReference type="CDD" id="cd09336">
    <property type="entry name" value="LIM1_Paxillin_like"/>
    <property type="match status" value="1"/>
</dbReference>
<dbReference type="CDD" id="cd09407">
    <property type="entry name" value="LIM2_Paxillin"/>
    <property type="match status" value="1"/>
</dbReference>
<dbReference type="CDD" id="cd09338">
    <property type="entry name" value="LIM3_Paxillin_like"/>
    <property type="match status" value="1"/>
</dbReference>
<dbReference type="CDD" id="cd09411">
    <property type="entry name" value="LIM4_Paxillin"/>
    <property type="match status" value="1"/>
</dbReference>
<dbReference type="FunFam" id="2.10.110.10:FF:000008">
    <property type="entry name" value="Paxillin isoform 1"/>
    <property type="match status" value="1"/>
</dbReference>
<dbReference type="FunFam" id="2.10.110.10:FF:000009">
    <property type="entry name" value="Paxillin isoform 1"/>
    <property type="match status" value="1"/>
</dbReference>
<dbReference type="FunFam" id="2.10.110.10:FF:000012">
    <property type="entry name" value="Paxillin isoform 1"/>
    <property type="match status" value="1"/>
</dbReference>
<dbReference type="FunFam" id="2.10.110.10:FF:000018">
    <property type="entry name" value="Paxillin isoform 1"/>
    <property type="match status" value="1"/>
</dbReference>
<dbReference type="Gene3D" id="2.10.110.10">
    <property type="entry name" value="Cysteine Rich Protein"/>
    <property type="match status" value="4"/>
</dbReference>
<dbReference type="InterPro" id="IPR047072">
    <property type="entry name" value="Paxillin_Lim_dom2"/>
</dbReference>
<dbReference type="InterPro" id="IPR001904">
    <property type="entry name" value="Paxillin_Lim_dom4"/>
</dbReference>
<dbReference type="InterPro" id="IPR047075">
    <property type="entry name" value="Paxillin_TGFB1I1_LIM_dom1"/>
</dbReference>
<dbReference type="InterPro" id="IPR001781">
    <property type="entry name" value="Znf_LIM"/>
</dbReference>
<dbReference type="PANTHER" id="PTHR24216:SF11">
    <property type="entry name" value="PAXILLIN"/>
    <property type="match status" value="1"/>
</dbReference>
<dbReference type="PANTHER" id="PTHR24216">
    <property type="entry name" value="PAXILLIN-RELATED"/>
    <property type="match status" value="1"/>
</dbReference>
<dbReference type="Pfam" id="PF00412">
    <property type="entry name" value="LIM"/>
    <property type="match status" value="4"/>
</dbReference>
<dbReference type="Pfam" id="PF03535">
    <property type="entry name" value="Paxillin"/>
    <property type="match status" value="1"/>
</dbReference>
<dbReference type="PRINTS" id="PR00832">
    <property type="entry name" value="PAXILLIN"/>
</dbReference>
<dbReference type="SMART" id="SM00132">
    <property type="entry name" value="LIM"/>
    <property type="match status" value="4"/>
</dbReference>
<dbReference type="SUPFAM" id="SSF57716">
    <property type="entry name" value="Glucocorticoid receptor-like (DNA-binding domain)"/>
    <property type="match status" value="5"/>
</dbReference>
<dbReference type="PROSITE" id="PS00478">
    <property type="entry name" value="LIM_DOMAIN_1"/>
    <property type="match status" value="4"/>
</dbReference>
<dbReference type="PROSITE" id="PS50023">
    <property type="entry name" value="LIM_DOMAIN_2"/>
    <property type="match status" value="4"/>
</dbReference>
<gene>
    <name evidence="41" type="primary">PXN</name>
</gene>
<sequence length="591" mass="64505">MDDLDALLADLESTTSHISKRPVFLSEETPYSYPTGNHTYQEIAVPPPVPPPPSSEALNGTILDPLDQWQPSSSRFIHQQPQSSSPVYGSSAKTSSVSNPQDSVGSPCSRVGEEEHVYSFPNKQKSAEPSPTVMSTSLGSNLSELDRLLLELNAVQHNPPGFPADEANSSPPLPGALSPLYGVPETNSPLGGKAGPLTKEKPKRNGGRGLEDVRPSVESLLDELESSVPSPVPAITVNQGEMSSPQRVTSTQQQTRISASSATRELDELMASLSDFKIQGLEQRADGERCWAAGWPRDGGRSSPGGQDEGGFMAQGKTGSSSPPGGPPKPGSQLDSMLGSLQSDLNKLGVATVAKGVCGACKKPIAGQVVTAMGKTWHPEHFVCTHCQEEIGSRNFFERDGQPYCEKDYHNLFSPRCYYCNGPILDKVVTALDRTWHPEHFFCAQCGAFFGPEGFHEKDGKAYCRKDYFDMFAPKCGGCARAILENYISALNTLWHPECFVCRECFTPFVNGSFFEHDGQPYCEVHYHERRGSLCSGCQKPITGRCITAMAKKFHPEHFVCAFCLKQLNKGTFKEQNDKPYCQNCFLKLFC</sequence>
<comment type="function">
    <text evidence="29">Cytoskeletal protein involved in actin-membrane attachment at sites of cell adhesion to the extracellular matrix (focal adhesion). Recruits other proteins such as TRIM15 to focal adhesion.</text>
</comment>
<comment type="subunit">
    <text evidence="3 4 7 8 9 10 12 13 16 17 18 19 21 22 23 24 25 26 28 29 30 32">Interacts in vitro with VCL/vinculin as well as to the SH3 domain of SRC and, when tyrosine phosphorylated, to the SH2 domain of CRK (PubMed:7534286). Interacts with GIT1 (PubMed:10938112). Interacts with NUDT16L1/SDOS (By similarity). Interacts with PTK2/FAK1 (PubMed:14527389). Interacts with PTK2B/PYK2 (PubMed:19358827). Interacts with ASAP2 (PubMed:10749932). Interacts with unphosphorylated ITGA4 (PubMed:10604475). Interacts with RNF5 (PubMed:12861019). Interacts with PDCD10 (PubMed:20489202). Interacts with NEK3, the interaction is prolactin-dependent (PubMed:17297458). Interacts with PTK6 (PubMed:15572663). Interacts with TGFB1I1 (By similarity). Interacts with SORBS1 (PubMed:17462669). Interacts with PARVB (PubMed:22869380). Interacts (via LD motif 4) with PARVA/PARVIN (PubMed:15817463, PubMed:18508764, PubMed:18940607). Interacts (via LD motif 4) with ILK (PubMed:15817463, PubMed:18508764, PubMed:18940607). Interacts (via cytoplasmic domain) with CEACAM1; the interaction is phosphotyrosyl-dependent (PubMed:11035932). Interacts with LIMA1; this complex stabilizes actin dynamics (PubMed:24694988). Interacts with CD36 (via C-terminus) (PubMed:20037584). Interacts with TRIM15 (PubMed:25015296). Interacts with PAK4; PAK4 acts as a scaffold to suppport PAXI phosphorylation at Ser-272 (PubMed:26598620).</text>
</comment>
<comment type="subunit">
    <molecule>Isoform Beta</molecule>
    <text evidence="33">Interacts strongly with PTK2/FAK1 and weakly with VCL/vinculin.</text>
</comment>
<comment type="subunit">
    <molecule>Isoform Gamma</molecule>
    <text evidence="33">Interacts strongly with VCL/vinculin but only weakly with PTK2/FAK1.</text>
</comment>
<comment type="interaction">
    <interactant intactId="EBI-702209">
        <id>P49023</id>
    </interactant>
    <interactant intactId="EBI-1380630">
        <id>P41240</id>
        <label>CSK</label>
    </interactant>
    <organismsDiffer>false</organismsDiffer>
    <experiments>4</experiments>
</comment>
<comment type="interaction">
    <interactant intactId="EBI-702209">
        <id>P49023</id>
    </interactant>
    <interactant intactId="EBI-491549">
        <id>P35222</id>
        <label>CTNNB1</label>
    </interactant>
    <organismsDiffer>false</organismsDiffer>
    <experiments>4</experiments>
</comment>
<comment type="interaction">
    <interactant intactId="EBI-702209">
        <id>P49023</id>
    </interactant>
    <interactant intactId="EBI-517684">
        <id>Q13480</id>
        <label>GAB1</label>
    </interactant>
    <organismsDiffer>false</organismsDiffer>
    <experiments>2</experiments>
</comment>
<comment type="interaction">
    <interactant intactId="EBI-702209">
        <id>P49023</id>
    </interactant>
    <interactant intactId="EBI-466061">
        <id>Q9Y2X7</id>
        <label>GIT1</label>
    </interactant>
    <organismsDiffer>false</organismsDiffer>
    <experiments>3</experiments>
</comment>
<comment type="interaction">
    <interactant intactId="EBI-702209">
        <id>P49023</id>
    </interactant>
    <interactant intactId="EBI-1046878">
        <id>Q14161</id>
        <label>GIT2</label>
    </interactant>
    <organismsDiffer>false</organismsDiffer>
    <experiments>4</experiments>
</comment>
<comment type="interaction">
    <interactant intactId="EBI-702209">
        <id>P49023</id>
    </interactant>
    <interactant intactId="EBI-703044">
        <id>P13612</id>
        <label>ITGA4</label>
    </interactant>
    <organismsDiffer>false</organismsDiffer>
    <experiments>5</experiments>
</comment>
<comment type="interaction">
    <interactant intactId="EBI-702209">
        <id>P49023</id>
    </interactant>
    <interactant intactId="EBI-702142">
        <id>Q05397</id>
        <label>PTK2</label>
    </interactant>
    <organismsDiffer>false</organismsDiffer>
    <experiments>19</experiments>
</comment>
<comment type="interaction">
    <interactant intactId="EBI-702209">
        <id>P49023</id>
    </interactant>
    <interactant intactId="EBI-297779">
        <id>Q06124</id>
        <label>PTPN11</label>
    </interactant>
    <organismsDiffer>false</organismsDiffer>
    <experiments>3</experiments>
</comment>
<comment type="interaction">
    <interactant intactId="EBI-702209">
        <id>P49023</id>
    </interactant>
    <interactant intactId="EBI-2266035">
        <id>Q05209</id>
        <label>PTPN12</label>
    </interactant>
    <organismsDiffer>false</organismsDiffer>
    <experiments>4</experiments>
</comment>
<comment type="interaction">
    <interactant intactId="EBI-702209">
        <id>P49023</id>
    </interactant>
    <interactant intactId="EBI-348482">
        <id>Q99942</id>
        <label>RNF5</label>
    </interactant>
    <organismsDiffer>false</organismsDiffer>
    <experiments>6</experiments>
</comment>
<comment type="interaction">
    <interactant intactId="EBI-702209">
        <id>P49023</id>
    </interactant>
    <interactant intactId="EBI-7281937">
        <id>P06931</id>
        <label>E6</label>
    </interactant>
    <organismsDiffer>true</organismsDiffer>
    <experiments>3</experiments>
</comment>
<comment type="interaction">
    <interactant intactId="EBI-702209">
        <id>P49023</id>
    </interactant>
    <interactant intactId="EBI-963421">
        <id>Q09463</id>
        <label>rnf-5</label>
    </interactant>
    <organismsDiffer>true</organismsDiffer>
    <experiments>2</experiments>
</comment>
<comment type="interaction">
    <interactant intactId="EBI-702209">
        <id>P49023</id>
    </interactant>
    <interactant intactId="EBI-7072893">
        <id>Q62417-2</id>
        <label>Sorbs1</label>
    </interactant>
    <organismsDiffer>true</organismsDiffer>
    <experiments>8</experiments>
</comment>
<comment type="interaction">
    <interactant intactId="EBI-11954250">
        <id>P49023-2</id>
    </interactant>
    <interactant intactId="EBI-2105445">
        <id>P51451</id>
        <label>BLK</label>
    </interactant>
    <organismsDiffer>false</organismsDiffer>
    <experiments>3</experiments>
</comment>
<comment type="interaction">
    <interactant intactId="EBI-11954250">
        <id>P49023-2</id>
    </interactant>
    <interactant intactId="EBI-744973">
        <id>Q9C005</id>
        <label>DPY30</label>
    </interactant>
    <organismsDiffer>false</organismsDiffer>
    <experiments>3</experiments>
</comment>
<comment type="interaction">
    <interactant intactId="EBI-11954250">
        <id>P49023-2</id>
    </interactant>
    <interactant intactId="EBI-8639312">
        <id>P25800</id>
        <label>LMO1</label>
    </interactant>
    <organismsDiffer>false</organismsDiffer>
    <experiments>5</experiments>
</comment>
<comment type="interaction">
    <interactant intactId="EBI-11954250">
        <id>P49023-2</id>
    </interactant>
    <interactant intactId="EBI-11742507">
        <id>Q8TAP4-4</id>
        <label>LMO3</label>
    </interactant>
    <organismsDiffer>false</organismsDiffer>
    <experiments>3</experiments>
</comment>
<comment type="interaction">
    <interactant intactId="EBI-11954250">
        <id>P49023-2</id>
    </interactant>
    <interactant intactId="EBI-928842">
        <id>Q9GZM8</id>
        <label>NDEL1</label>
    </interactant>
    <organismsDiffer>false</organismsDiffer>
    <experiments>5</experiments>
</comment>
<comment type="interaction">
    <interactant intactId="EBI-11954250">
        <id>P49023-2</id>
    </interactant>
    <interactant intactId="EBI-15735104">
        <id>Q9NVD7-1</id>
        <label>PARVA</label>
    </interactant>
    <organismsDiffer>false</organismsDiffer>
    <experiments>3</experiments>
</comment>
<comment type="interaction">
    <interactant intactId="EBI-11954250">
        <id>P49023-2</id>
    </interactant>
    <interactant intactId="EBI-11954248">
        <id>Q8IVE3-3</id>
        <label>PLEKHH2</label>
    </interactant>
    <organismsDiffer>false</organismsDiffer>
    <experiments>3</experiments>
</comment>
<comment type="interaction">
    <interactant intactId="EBI-11954250">
        <id>P49023-2</id>
    </interactant>
    <interactant intactId="EBI-12014286">
        <id>Q494U1-3</id>
        <label>PLEKHN1</label>
    </interactant>
    <organismsDiffer>false</organismsDiffer>
    <experiments>3</experiments>
</comment>
<comment type="interaction">
    <interactant intactId="EBI-11954250">
        <id>P49023-2</id>
    </interactant>
    <interactant intactId="EBI-11955057">
        <id>Q8N8B7-2</id>
        <label>TCEANC</label>
    </interactant>
    <organismsDiffer>false</organismsDiffer>
    <experiments>3</experiments>
</comment>
<comment type="interaction">
    <interactant intactId="EBI-11954250">
        <id>P49023-2</id>
    </interactant>
    <interactant intactId="EBI-310886">
        <id>Q9P202</id>
        <label>WHRN</label>
    </interactant>
    <organismsDiffer>false</organismsDiffer>
    <experiments>3</experiments>
</comment>
<comment type="interaction">
    <interactant intactId="EBI-11954250">
        <id>P49023-2</id>
    </interactant>
    <interactant intactId="EBI-515331">
        <id>P07947</id>
        <label>YES1</label>
    </interactant>
    <organismsDiffer>false</organismsDiffer>
    <experiments>3</experiments>
</comment>
<comment type="subcellular location">
    <subcellularLocation>
        <location evidence="25">Cytoplasm</location>
        <location evidence="25">Cytoskeleton</location>
    </subcellularLocation>
    <subcellularLocation>
        <location evidence="25 27 29">Cell junction</location>
        <location evidence="25 27 29">Focal adhesion</location>
    </subcellularLocation>
    <subcellularLocation>
        <location evidence="4">Cytoplasm</location>
        <location evidence="4">Cell cortex</location>
    </subcellularLocation>
    <text evidence="1 27">Colocalizes with integrins at the cell periphery. Colocalize with PXN to membrane ruffles and the leading edge of migrating cells (PubMed:23128389).</text>
</comment>
<comment type="alternative products">
    <event type="alternative splicing"/>
    <isoform>
        <id>P49023-1</id>
        <name>Beta</name>
        <sequence type="displayed"/>
    </isoform>
    <isoform>
        <id>P49023-2</id>
        <name>Alpha</name>
        <sequence type="described" ref="VSP_003114"/>
    </isoform>
    <isoform>
        <id>P49023-3</id>
        <name>Gamma</name>
        <sequence type="described" ref="VSP_003115"/>
    </isoform>
    <isoform>
        <id>P49023-4</id>
        <name>4</name>
        <sequence type="described" ref="VSP_040483 VSP_003114"/>
    </isoform>
</comment>
<comment type="PTM">
    <text evidence="1 11 16 20 27 30">Phosphorylated by MAPK1/ERK2 (By similarity). Phosphorylated on tyrosine residues during integrin-mediated cell adhesion, embryonic development, fibroblast transformation and following stimulation of cells by mitogens. Phosphorylation at Ser-244 by CDK5 reduces its interaction with PTK2/FAK1 in matrix-cell focal adhesions (MCFA) during oligodendrocytes (OLs) differentiation. Phosphorylation at Tyr-31 and Tyr-118 by PTK6 promote the activation of RAC1 via CRK/CrKII, thereby promoting migration and invasion. Phosphorylation at Ser-250 by SLK is required for PXN redistribution and cell motility (PubMed:23128389). Phosphorylation at Ser-272 promotes focal adhesion disassembly during cell migration (PubMed:26598620).</text>
</comment>
<comment type="similarity">
    <text evidence="40">Belongs to the paxillin family.</text>
</comment>
<comment type="online information" name="Atlas of Genetics and Cytogenetics in Oncology and Haematology">
    <link uri="https://atlasgeneticsoncology.org/gene/41953/PXN"/>
</comment>
<accession>P49023</accession>
<accession>B2RAI3</accession>
<accession>B7ZMB4</accession>
<accession>O14970</accession>
<accession>O14971</accession>
<accession>O60360</accession>
<accession>Q5HYA4</accession>
<evidence type="ECO:0000250" key="1"/>
<evidence type="ECO:0000250" key="2">
    <source>
        <dbReference type="UniProtKB" id="P49024"/>
    </source>
</evidence>
<evidence type="ECO:0000250" key="3">
    <source>
        <dbReference type="UniProtKB" id="Q66H76"/>
    </source>
</evidence>
<evidence type="ECO:0000250" key="4">
    <source>
        <dbReference type="UniProtKB" id="Q8VI36"/>
    </source>
</evidence>
<evidence type="ECO:0000255" key="5">
    <source>
        <dbReference type="PROSITE-ProRule" id="PRU00125"/>
    </source>
</evidence>
<evidence type="ECO:0000256" key="6">
    <source>
        <dbReference type="SAM" id="MobiDB-lite"/>
    </source>
</evidence>
<evidence type="ECO:0000269" key="7">
    <source>
    </source>
</evidence>
<evidence type="ECO:0000269" key="8">
    <source>
    </source>
</evidence>
<evidence type="ECO:0000269" key="9">
    <source>
    </source>
</evidence>
<evidence type="ECO:0000269" key="10">
    <source>
    </source>
</evidence>
<evidence type="ECO:0000269" key="11">
    <source>
    </source>
</evidence>
<evidence type="ECO:0000269" key="12">
    <source>
    </source>
</evidence>
<evidence type="ECO:0000269" key="13">
    <source>
    </source>
</evidence>
<evidence type="ECO:0000269" key="14">
    <source>
    </source>
</evidence>
<evidence type="ECO:0000269" key="15">
    <source>
    </source>
</evidence>
<evidence type="ECO:0000269" key="16">
    <source>
    </source>
</evidence>
<evidence type="ECO:0000269" key="17">
    <source>
    </source>
</evidence>
<evidence type="ECO:0000269" key="18">
    <source>
    </source>
</evidence>
<evidence type="ECO:0000269" key="19">
    <source>
    </source>
</evidence>
<evidence type="ECO:0000269" key="20">
    <source>
    </source>
</evidence>
<evidence type="ECO:0000269" key="21">
    <source>
    </source>
</evidence>
<evidence type="ECO:0000269" key="22">
    <source>
    </source>
</evidence>
<evidence type="ECO:0000269" key="23">
    <source>
    </source>
</evidence>
<evidence type="ECO:0000269" key="24">
    <source>
    </source>
</evidence>
<evidence type="ECO:0000269" key="25">
    <source>
    </source>
</evidence>
<evidence type="ECO:0000269" key="26">
    <source>
    </source>
</evidence>
<evidence type="ECO:0000269" key="27">
    <source>
    </source>
</evidence>
<evidence type="ECO:0000269" key="28">
    <source>
    </source>
</evidence>
<evidence type="ECO:0000269" key="29">
    <source>
    </source>
</evidence>
<evidence type="ECO:0000269" key="30">
    <source>
    </source>
</evidence>
<evidence type="ECO:0000269" key="31">
    <source>
    </source>
</evidence>
<evidence type="ECO:0000269" key="32">
    <source>
    </source>
</evidence>
<evidence type="ECO:0000269" key="33">
    <source>
    </source>
</evidence>
<evidence type="ECO:0000269" key="34">
    <source ref="2"/>
</evidence>
<evidence type="ECO:0000303" key="35">
    <source>
    </source>
</evidence>
<evidence type="ECO:0000303" key="36">
    <source>
    </source>
</evidence>
<evidence type="ECO:0000303" key="37">
    <source>
    </source>
</evidence>
<evidence type="ECO:0000303" key="38">
    <source>
    </source>
</evidence>
<evidence type="ECO:0000303" key="39">
    <source>
    </source>
</evidence>
<evidence type="ECO:0000305" key="40"/>
<evidence type="ECO:0000312" key="41">
    <source>
        <dbReference type="HGNC" id="HGNC:9718"/>
    </source>
</evidence>
<evidence type="ECO:0007744" key="42">
    <source>
    </source>
</evidence>
<evidence type="ECO:0007744" key="43">
    <source>
    </source>
</evidence>
<evidence type="ECO:0007744" key="44">
    <source>
    </source>
</evidence>
<evidence type="ECO:0007744" key="45">
    <source>
    </source>
</evidence>
<evidence type="ECO:0007744" key="46">
    <source>
    </source>
</evidence>
<evidence type="ECO:0007744" key="47">
    <source>
    </source>
</evidence>
<evidence type="ECO:0007744" key="48">
    <source>
    </source>
</evidence>
<evidence type="ECO:0007744" key="49">
    <source>
    </source>
</evidence>
<evidence type="ECO:0007744" key="50">
    <source>
    </source>
</evidence>
<evidence type="ECO:0007744" key="51">
    <source>
    </source>
</evidence>
<evidence type="ECO:0007829" key="52">
    <source>
        <dbReference type="PDB" id="2VZD"/>
    </source>
</evidence>
<evidence type="ECO:0007829" key="53">
    <source>
        <dbReference type="PDB" id="2VZG"/>
    </source>
</evidence>
<evidence type="ECO:0007829" key="54">
    <source>
        <dbReference type="PDB" id="4XH2"/>
    </source>
</evidence>
<evidence type="ECO:0007829" key="55">
    <source>
        <dbReference type="PDB" id="6U4M"/>
    </source>
</evidence>
<evidence type="ECO:0007829" key="56">
    <source>
        <dbReference type="PDB" id="7QB0"/>
    </source>
</evidence>
<name>PAXI_HUMAN</name>
<feature type="chain" id="PRO_0000075853" description="Paxillin">
    <location>
        <begin position="1"/>
        <end position="591"/>
    </location>
</feature>
<feature type="domain" description="LIM zinc-binding 1" evidence="5">
    <location>
        <begin position="356"/>
        <end position="415"/>
    </location>
</feature>
<feature type="domain" description="LIM zinc-binding 2" evidence="5">
    <location>
        <begin position="416"/>
        <end position="473"/>
    </location>
</feature>
<feature type="domain" description="LIM zinc-binding 3" evidence="5">
    <location>
        <begin position="474"/>
        <end position="533"/>
    </location>
</feature>
<feature type="domain" description="LIM zinc-binding 4" evidence="5">
    <location>
        <begin position="534"/>
        <end position="591"/>
    </location>
</feature>
<feature type="region of interest" description="Disordered" evidence="6">
    <location>
        <begin position="17"/>
        <end position="138"/>
    </location>
</feature>
<feature type="region of interest" description="Disordered" evidence="6">
    <location>
        <begin position="159"/>
        <end position="260"/>
    </location>
</feature>
<feature type="region of interest" description="Required for binding to PARVA and ILK" evidence="2">
    <location>
        <begin position="262"/>
        <end position="315"/>
    </location>
</feature>
<feature type="region of interest" description="Disordered" evidence="6">
    <location>
        <begin position="291"/>
        <end position="335"/>
    </location>
</feature>
<feature type="short sequence motif" description="LD motif 1">
    <location>
        <begin position="3"/>
        <end position="15"/>
    </location>
</feature>
<feature type="short sequence motif" description="LD motif 2">
    <location>
        <begin position="144"/>
        <end position="156"/>
    </location>
</feature>
<feature type="short sequence motif" description="LD motif 3">
    <location>
        <begin position="216"/>
        <end position="228"/>
    </location>
</feature>
<feature type="short sequence motif" description="LD motif 4">
    <location>
        <begin position="265"/>
        <end position="276"/>
    </location>
</feature>
<feature type="short sequence motif" description="LD motif 5">
    <location>
        <begin position="333"/>
        <end position="345"/>
    </location>
</feature>
<feature type="compositionally biased region" description="Pro residues" evidence="6">
    <location>
        <begin position="45"/>
        <end position="54"/>
    </location>
</feature>
<feature type="compositionally biased region" description="Polar residues" evidence="6">
    <location>
        <begin position="69"/>
        <end position="106"/>
    </location>
</feature>
<feature type="compositionally biased region" description="Polar residues" evidence="6">
    <location>
        <begin position="121"/>
        <end position="137"/>
    </location>
</feature>
<feature type="compositionally biased region" description="Polar residues" evidence="6">
    <location>
        <begin position="236"/>
        <end position="260"/>
    </location>
</feature>
<feature type="modified residue" description="N-acetylmethionine" evidence="31 45">
    <location>
        <position position="1"/>
    </location>
</feature>
<feature type="modified residue" description="Phosphotyrosine; by PTK6" evidence="11 16">
    <location>
        <position position="31"/>
    </location>
</feature>
<feature type="modified residue" description="Phosphoserine" evidence="4">
    <location>
        <position position="83"/>
    </location>
</feature>
<feature type="modified residue" description="Phosphoserine" evidence="44 46 47 51">
    <location>
        <position position="85"/>
    </location>
</feature>
<feature type="modified residue" description="Phosphotyrosine" evidence="4">
    <location>
        <position position="88"/>
    </location>
</feature>
<feature type="modified residue" description="Phosphoserine" evidence="42 43 44">
    <location>
        <position position="106"/>
    </location>
</feature>
<feature type="modified residue" description="Phosphotyrosine; by PTK6" evidence="11 16">
    <location>
        <position position="118"/>
    </location>
</feature>
<feature type="modified residue" description="Phosphoserine" evidence="47">
    <location>
        <position position="119"/>
    </location>
</feature>
<feature type="modified residue" description="Phosphoserine" evidence="44 46 47 48 50">
    <location>
        <position position="126"/>
    </location>
</feature>
<feature type="modified residue" description="Phosphoserine" evidence="44">
    <location>
        <position position="130"/>
    </location>
</feature>
<feature type="modified residue" description="Phosphothreonine" evidence="4">
    <location>
        <position position="132"/>
    </location>
</feature>
<feature type="modified residue" description="Phosphoserine" evidence="44">
    <location>
        <position position="137"/>
    </location>
</feature>
<feature type="modified residue" description="Phosphoserine" evidence="4">
    <location>
        <position position="140"/>
    </location>
</feature>
<feature type="modified residue" description="Phosphoserine" evidence="51">
    <location>
        <position position="143"/>
    </location>
</feature>
<feature type="modified residue" description="Phosphotyrosine" evidence="11">
    <location>
        <position position="181"/>
    </location>
</feature>
<feature type="modified residue" description="Phosphoserine" evidence="3">
    <location>
        <position position="230"/>
    </location>
</feature>
<feature type="modified residue" description="Phosphoserine; by CDK5" evidence="20">
    <location>
        <position position="244"/>
    </location>
</feature>
<feature type="modified residue" description="Phosphoserine; by SLK" evidence="27">
    <location>
        <position position="250"/>
    </location>
</feature>
<feature type="modified residue" description="Phosphoserine" evidence="3">
    <location>
        <position position="258"/>
    </location>
</feature>
<feature type="modified residue" description="Phosphoserine" evidence="3">
    <location>
        <position position="261"/>
    </location>
</feature>
<feature type="modified residue" description="Phosphoserine" evidence="30 50">
    <location>
        <position position="272"/>
    </location>
</feature>
<feature type="modified residue" description="Phosphoserine" evidence="50">
    <location>
        <position position="303"/>
    </location>
</feature>
<feature type="modified residue" description="Phosphoserine" evidence="44">
    <location>
        <position position="322"/>
    </location>
</feature>
<feature type="modified residue" description="Phosphoserine" evidence="3">
    <location>
        <position position="332"/>
    </location>
</feature>
<feature type="modified residue" description="Phosphoserine" evidence="4">
    <location>
        <position position="340"/>
    </location>
</feature>
<feature type="modified residue" description="Phosphoserine" evidence="51">
    <location>
        <position position="533"/>
    </location>
</feature>
<feature type="splice variant" id="VSP_040483" description="In isoform 4." evidence="37">
    <location>
        <begin position="1"/>
        <end position="133"/>
    </location>
</feature>
<feature type="splice variant" id="VSP_003114" description="In isoform Alpha and isoform 4." evidence="35 36 37 38">
    <location>
        <begin position="278"/>
        <end position="311"/>
    </location>
</feature>
<feature type="splice variant" id="VSP_003115" description="In isoform Gamma." evidence="39">
    <original>IQGLEQRADGERCWAAGWPRDGGRSSPGGQDEGG</original>
    <variation>GSWPLEEVVLLVSISSSVQEGEKYPHPCAARHRTPSLRSPDQPPPCPQ</variation>
    <location>
        <begin position="278"/>
        <end position="311"/>
    </location>
</feature>
<feature type="sequence variant" id="VAR_065099" description="In dbSNP:rs4767884." evidence="14 15 32 33 34">
    <original>S</original>
    <variation>G</variation>
    <location>
        <position position="73"/>
    </location>
</feature>
<feature type="mutagenesis site" description="Loss of interaction with PDCD10." evidence="25">
    <original>LL</original>
    <variation>RR</variation>
    <location>
        <begin position="7"/>
        <end position="8"/>
    </location>
</feature>
<feature type="sequence conflict" description="In Ref. 3; BAA18997." evidence="40" ref="3">
    <original>G</original>
    <variation>D</variation>
    <location>
        <position position="280"/>
    </location>
</feature>
<feature type="sequence conflict" description="In Ref. 5; CAI46024." evidence="40" ref="5">
    <original>P</original>
    <variation>L</variation>
    <location>
        <position position="327"/>
    </location>
</feature>
<feature type="sequence conflict" description="In Ref. 5; CAI46024." evidence="40" ref="5">
    <original>F</original>
    <variation>S</variation>
    <location>
        <position position="413"/>
    </location>
</feature>
<feature type="helix" evidence="52">
    <location>
        <begin position="3"/>
        <end position="11"/>
    </location>
</feature>
<feature type="helix" evidence="53">
    <location>
        <begin position="144"/>
        <end position="154"/>
    </location>
</feature>
<feature type="helix" evidence="54">
    <location>
        <begin position="261"/>
        <end position="271"/>
    </location>
</feature>
<feature type="turn" evidence="56">
    <location>
        <begin position="418"/>
        <end position="421"/>
    </location>
</feature>
<feature type="strand" evidence="56">
    <location>
        <begin position="429"/>
        <end position="431"/>
    </location>
</feature>
<feature type="strand" evidence="56">
    <location>
        <begin position="434"/>
        <end position="436"/>
    </location>
</feature>
<feature type="strand" evidence="56">
    <location>
        <begin position="438"/>
        <end position="440"/>
    </location>
</feature>
<feature type="strand" evidence="56">
    <location>
        <begin position="444"/>
        <end position="446"/>
    </location>
</feature>
<feature type="strand" evidence="56">
    <location>
        <begin position="456"/>
        <end position="458"/>
    </location>
</feature>
<feature type="strand" evidence="56">
    <location>
        <begin position="461"/>
        <end position="463"/>
    </location>
</feature>
<feature type="helix" evidence="56">
    <location>
        <begin position="465"/>
        <end position="472"/>
    </location>
</feature>
<feature type="strand" evidence="56">
    <location>
        <begin position="477"/>
        <end position="479"/>
    </location>
</feature>
<feature type="strand" evidence="56">
    <location>
        <begin position="488"/>
        <end position="490"/>
    </location>
</feature>
<feature type="strand" evidence="56">
    <location>
        <begin position="493"/>
        <end position="495"/>
    </location>
</feature>
<feature type="strand" evidence="56">
    <location>
        <begin position="497"/>
        <end position="499"/>
    </location>
</feature>
<feature type="turn" evidence="56">
    <location>
        <begin position="503"/>
        <end position="505"/>
    </location>
</feature>
<feature type="strand" evidence="56">
    <location>
        <begin position="515"/>
        <end position="517"/>
    </location>
</feature>
<feature type="strand" evidence="56">
    <location>
        <begin position="520"/>
        <end position="522"/>
    </location>
</feature>
<feature type="helix" evidence="56">
    <location>
        <begin position="524"/>
        <end position="532"/>
    </location>
</feature>
<feature type="turn" evidence="55">
    <location>
        <begin position="536"/>
        <end position="538"/>
    </location>
</feature>
<feature type="strand" evidence="55">
    <location>
        <begin position="547"/>
        <end position="551"/>
    </location>
</feature>
<feature type="turn" evidence="55">
    <location>
        <begin position="556"/>
        <end position="558"/>
    </location>
</feature>
<feature type="turn" evidence="55">
    <location>
        <begin position="562"/>
        <end position="564"/>
    </location>
</feature>
<feature type="helix" evidence="55">
    <location>
        <begin position="570"/>
        <end position="572"/>
    </location>
</feature>
<feature type="strand" evidence="55">
    <location>
        <begin position="573"/>
        <end position="576"/>
    </location>
</feature>
<feature type="strand" evidence="55">
    <location>
        <begin position="579"/>
        <end position="582"/>
    </location>
</feature>
<feature type="helix" evidence="55">
    <location>
        <begin position="583"/>
        <end position="589"/>
    </location>
</feature>
<feature type="initiator methionine" description="Removed" evidence="31 49">
    <location sequence="P49023-4">
        <position position="1"/>
    </location>
</feature>
<feature type="modified residue" description="N-acetylserine" evidence="31 49">
    <location sequence="P49023-4">
        <position position="2"/>
    </location>
</feature>
<proteinExistence type="evidence at protein level"/>
<protein>
    <recommendedName>
        <fullName evidence="38">Paxillin</fullName>
    </recommendedName>
</protein>
<reference key="1">
    <citation type="journal article" date="1995" name="J. Biol. Chem.">
        <title>Molecular cloning of human paxillin, a focal adhesion protein phosphorylated by P210BCR/ABL.</title>
        <authorList>
            <person name="Salgia R."/>
            <person name="Li J.-L."/>
            <person name="Lo S.H."/>
            <person name="Brunkhorst B."/>
            <person name="Kansas G.S."/>
            <person name="Sobhany E.S."/>
            <person name="Sun Y."/>
            <person name="Pisick E."/>
            <person name="Hallek M."/>
            <person name="Ernst T."/>
            <person name="Tantravahi R."/>
            <person name="Chen L.B."/>
            <person name="Griffin J.D."/>
        </authorList>
    </citation>
    <scope>NUCLEOTIDE SEQUENCE [MRNA] (ISOFORM ALPHA)</scope>
    <scope>INTERACTION WITH VCL; SRC AND CRK</scope>
    <scope>VARIANT GLY-73</scope>
</reference>
<reference key="2">
    <citation type="submission" date="1997-01" db="EMBL/GenBank/DDBJ databases">
        <title>Transcription map of the 5cM region surrounding the hepatocyte nuclear factor-1a/MODY3 gene on chromosome 12.</title>
        <authorList>
            <person name="Yamagata K."/>
            <person name="Oda N."/>
            <person name="Furuta H."/>
            <person name="Vaxillaire M."/>
            <person name="Southam L."/>
            <person name="Boriraj V."/>
            <person name="Chen X."/>
            <person name="Oda Y."/>
            <person name="Takeda J."/>
            <person name="Yamada S."/>
            <person name="Nishigori H."/>
            <person name="Lebeau M.M."/>
            <person name="Lathrop M."/>
            <person name="Cox R.D."/>
            <person name="Bell G.I."/>
        </authorList>
    </citation>
    <scope>NUCLEOTIDE SEQUENCE [GENOMIC DNA]</scope>
    <scope>VARIANT GLY-73</scope>
</reference>
<reference key="3">
    <citation type="journal article" date="1997" name="J. Biol. Chem.">
        <title>Monocyte cells and cancer cells express novel paxillin isoforms with different binding properties to focal adhesion proteins.</title>
        <authorList>
            <person name="Mazaki Y."/>
            <person name="Hashimoto S."/>
            <person name="Sabe H."/>
        </authorList>
    </citation>
    <scope>NUCLEOTIDE SEQUENCE [MRNA] (ISOFORMS BETA AND GAMMA)</scope>
    <scope>INTERACTION WITH VCL AND PTK2</scope>
    <scope>VARIANT GLY-73</scope>
    <source>
        <tissue>Placenta</tissue>
    </source>
</reference>
<reference key="4">
    <citation type="journal article" date="2004" name="Nat. Genet.">
        <title>Complete sequencing and characterization of 21,243 full-length human cDNAs.</title>
        <authorList>
            <person name="Ota T."/>
            <person name="Suzuki Y."/>
            <person name="Nishikawa T."/>
            <person name="Otsuki T."/>
            <person name="Sugiyama T."/>
            <person name="Irie R."/>
            <person name="Wakamatsu A."/>
            <person name="Hayashi K."/>
            <person name="Sato H."/>
            <person name="Nagai K."/>
            <person name="Kimura K."/>
            <person name="Makita H."/>
            <person name="Sekine M."/>
            <person name="Obayashi M."/>
            <person name="Nishi T."/>
            <person name="Shibahara T."/>
            <person name="Tanaka T."/>
            <person name="Ishii S."/>
            <person name="Yamamoto J."/>
            <person name="Saito K."/>
            <person name="Kawai Y."/>
            <person name="Isono Y."/>
            <person name="Nakamura Y."/>
            <person name="Nagahari K."/>
            <person name="Murakami K."/>
            <person name="Yasuda T."/>
            <person name="Iwayanagi T."/>
            <person name="Wagatsuma M."/>
            <person name="Shiratori A."/>
            <person name="Sudo H."/>
            <person name="Hosoiri T."/>
            <person name="Kaku Y."/>
            <person name="Kodaira H."/>
            <person name="Kondo H."/>
            <person name="Sugawara M."/>
            <person name="Takahashi M."/>
            <person name="Kanda K."/>
            <person name="Yokoi T."/>
            <person name="Furuya T."/>
            <person name="Kikkawa E."/>
            <person name="Omura Y."/>
            <person name="Abe K."/>
            <person name="Kamihara K."/>
            <person name="Katsuta N."/>
            <person name="Sato K."/>
            <person name="Tanikawa M."/>
            <person name="Yamazaki M."/>
            <person name="Ninomiya K."/>
            <person name="Ishibashi T."/>
            <person name="Yamashita H."/>
            <person name="Murakawa K."/>
            <person name="Fujimori K."/>
            <person name="Tanai H."/>
            <person name="Kimata M."/>
            <person name="Watanabe M."/>
            <person name="Hiraoka S."/>
            <person name="Chiba Y."/>
            <person name="Ishida S."/>
            <person name="Ono Y."/>
            <person name="Takiguchi S."/>
            <person name="Watanabe S."/>
            <person name="Yosida M."/>
            <person name="Hotuta T."/>
            <person name="Kusano J."/>
            <person name="Kanehori K."/>
            <person name="Takahashi-Fujii A."/>
            <person name="Hara H."/>
            <person name="Tanase T.-O."/>
            <person name="Nomura Y."/>
            <person name="Togiya S."/>
            <person name="Komai F."/>
            <person name="Hara R."/>
            <person name="Takeuchi K."/>
            <person name="Arita M."/>
            <person name="Imose N."/>
            <person name="Musashino K."/>
            <person name="Yuuki H."/>
            <person name="Oshima A."/>
            <person name="Sasaki N."/>
            <person name="Aotsuka S."/>
            <person name="Yoshikawa Y."/>
            <person name="Matsunawa H."/>
            <person name="Ichihara T."/>
            <person name="Shiohata N."/>
            <person name="Sano S."/>
            <person name="Moriya S."/>
            <person name="Momiyama H."/>
            <person name="Satoh N."/>
            <person name="Takami S."/>
            <person name="Terashima Y."/>
            <person name="Suzuki O."/>
            <person name="Nakagawa S."/>
            <person name="Senoh A."/>
            <person name="Mizoguchi H."/>
            <person name="Goto Y."/>
            <person name="Shimizu F."/>
            <person name="Wakebe H."/>
            <person name="Hishigaki H."/>
            <person name="Watanabe T."/>
            <person name="Sugiyama A."/>
            <person name="Takemoto M."/>
            <person name="Kawakami B."/>
            <person name="Yamazaki M."/>
            <person name="Watanabe K."/>
            <person name="Kumagai A."/>
            <person name="Itakura S."/>
            <person name="Fukuzumi Y."/>
            <person name="Fujimori Y."/>
            <person name="Komiyama M."/>
            <person name="Tashiro H."/>
            <person name="Tanigami A."/>
            <person name="Fujiwara T."/>
            <person name="Ono T."/>
            <person name="Yamada K."/>
            <person name="Fujii Y."/>
            <person name="Ozaki K."/>
            <person name="Hirao M."/>
            <person name="Ohmori Y."/>
            <person name="Kawabata A."/>
            <person name="Hikiji T."/>
            <person name="Kobatake N."/>
            <person name="Inagaki H."/>
            <person name="Ikema Y."/>
            <person name="Okamoto S."/>
            <person name="Okitani R."/>
            <person name="Kawakami T."/>
            <person name="Noguchi S."/>
            <person name="Itoh T."/>
            <person name="Shigeta K."/>
            <person name="Senba T."/>
            <person name="Matsumura K."/>
            <person name="Nakajima Y."/>
            <person name="Mizuno T."/>
            <person name="Morinaga M."/>
            <person name="Sasaki M."/>
            <person name="Togashi T."/>
            <person name="Oyama M."/>
            <person name="Hata H."/>
            <person name="Watanabe M."/>
            <person name="Komatsu T."/>
            <person name="Mizushima-Sugano J."/>
            <person name="Satoh T."/>
            <person name="Shirai Y."/>
            <person name="Takahashi Y."/>
            <person name="Nakagawa K."/>
            <person name="Okumura K."/>
            <person name="Nagase T."/>
            <person name="Nomura N."/>
            <person name="Kikuchi H."/>
            <person name="Masuho Y."/>
            <person name="Yamashita R."/>
            <person name="Nakai K."/>
            <person name="Yada T."/>
            <person name="Nakamura Y."/>
            <person name="Ohara O."/>
            <person name="Isogai T."/>
            <person name="Sugano S."/>
        </authorList>
    </citation>
    <scope>NUCLEOTIDE SEQUENCE [LARGE SCALE MRNA] (ISOFORM ALPHA)</scope>
    <scope>VARIANT GLY-73</scope>
    <source>
        <tissue>Placenta</tissue>
    </source>
</reference>
<reference key="5">
    <citation type="journal article" date="2007" name="BMC Genomics">
        <title>The full-ORF clone resource of the German cDNA consortium.</title>
        <authorList>
            <person name="Bechtel S."/>
            <person name="Rosenfelder H."/>
            <person name="Duda A."/>
            <person name="Schmidt C.P."/>
            <person name="Ernst U."/>
            <person name="Wellenreuther R."/>
            <person name="Mehrle A."/>
            <person name="Schuster C."/>
            <person name="Bahr A."/>
            <person name="Bloecker H."/>
            <person name="Heubner D."/>
            <person name="Hoerlein A."/>
            <person name="Michel G."/>
            <person name="Wedler H."/>
            <person name="Koehrer K."/>
            <person name="Ottenwaelder B."/>
            <person name="Poustka A."/>
            <person name="Wiemann S."/>
            <person name="Schupp I."/>
        </authorList>
    </citation>
    <scope>NUCLEOTIDE SEQUENCE [LARGE SCALE MRNA] (ISOFORM 4)</scope>
    <source>
        <tissue>Fetal kidney</tissue>
    </source>
</reference>
<reference key="6">
    <citation type="journal article" date="2006" name="Nature">
        <title>The finished DNA sequence of human chromosome 12.</title>
        <authorList>
            <person name="Scherer S.E."/>
            <person name="Muzny D.M."/>
            <person name="Buhay C.J."/>
            <person name="Chen R."/>
            <person name="Cree A."/>
            <person name="Ding Y."/>
            <person name="Dugan-Rocha S."/>
            <person name="Gill R."/>
            <person name="Gunaratne P."/>
            <person name="Harris R.A."/>
            <person name="Hawes A.C."/>
            <person name="Hernandez J."/>
            <person name="Hodgson A.V."/>
            <person name="Hume J."/>
            <person name="Jackson A."/>
            <person name="Khan Z.M."/>
            <person name="Kovar-Smith C."/>
            <person name="Lewis L.R."/>
            <person name="Lozado R.J."/>
            <person name="Metzker M.L."/>
            <person name="Milosavljevic A."/>
            <person name="Miner G.R."/>
            <person name="Montgomery K.T."/>
            <person name="Morgan M.B."/>
            <person name="Nazareth L.V."/>
            <person name="Scott G."/>
            <person name="Sodergren E."/>
            <person name="Song X.-Z."/>
            <person name="Steffen D."/>
            <person name="Lovering R.C."/>
            <person name="Wheeler D.A."/>
            <person name="Worley K.C."/>
            <person name="Yuan Y."/>
            <person name="Zhang Z."/>
            <person name="Adams C.Q."/>
            <person name="Ansari-Lari M.A."/>
            <person name="Ayele M."/>
            <person name="Brown M.J."/>
            <person name="Chen G."/>
            <person name="Chen Z."/>
            <person name="Clerc-Blankenburg K.P."/>
            <person name="Davis C."/>
            <person name="Delgado O."/>
            <person name="Dinh H.H."/>
            <person name="Draper H."/>
            <person name="Gonzalez-Garay M.L."/>
            <person name="Havlak P."/>
            <person name="Jackson L.R."/>
            <person name="Jacob L.S."/>
            <person name="Kelly S.H."/>
            <person name="Li L."/>
            <person name="Li Z."/>
            <person name="Liu J."/>
            <person name="Liu W."/>
            <person name="Lu J."/>
            <person name="Maheshwari M."/>
            <person name="Nguyen B.-V."/>
            <person name="Okwuonu G.O."/>
            <person name="Pasternak S."/>
            <person name="Perez L.M."/>
            <person name="Plopper F.J.H."/>
            <person name="Santibanez J."/>
            <person name="Shen H."/>
            <person name="Tabor P.E."/>
            <person name="Verduzco D."/>
            <person name="Waldron L."/>
            <person name="Wang Q."/>
            <person name="Williams G.A."/>
            <person name="Zhang J."/>
            <person name="Zhou J."/>
            <person name="Allen C.C."/>
            <person name="Amin A.G."/>
            <person name="Anyalebechi V."/>
            <person name="Bailey M."/>
            <person name="Barbaria J.A."/>
            <person name="Bimage K.E."/>
            <person name="Bryant N.P."/>
            <person name="Burch P.E."/>
            <person name="Burkett C.E."/>
            <person name="Burrell K.L."/>
            <person name="Calderon E."/>
            <person name="Cardenas V."/>
            <person name="Carter K."/>
            <person name="Casias K."/>
            <person name="Cavazos I."/>
            <person name="Cavazos S.R."/>
            <person name="Ceasar H."/>
            <person name="Chacko J."/>
            <person name="Chan S.N."/>
            <person name="Chavez D."/>
            <person name="Christopoulos C."/>
            <person name="Chu J."/>
            <person name="Cockrell R."/>
            <person name="Cox C.D."/>
            <person name="Dang M."/>
            <person name="Dathorne S.R."/>
            <person name="David R."/>
            <person name="Davis C.M."/>
            <person name="Davy-Carroll L."/>
            <person name="Deshazo D.R."/>
            <person name="Donlin J.E."/>
            <person name="D'Souza L."/>
            <person name="Eaves K.A."/>
            <person name="Egan A."/>
            <person name="Emery-Cohen A.J."/>
            <person name="Escotto M."/>
            <person name="Flagg N."/>
            <person name="Forbes L.D."/>
            <person name="Gabisi A.M."/>
            <person name="Garza M."/>
            <person name="Hamilton C."/>
            <person name="Henderson N."/>
            <person name="Hernandez O."/>
            <person name="Hines S."/>
            <person name="Hogues M.E."/>
            <person name="Huang M."/>
            <person name="Idlebird D.G."/>
            <person name="Johnson R."/>
            <person name="Jolivet A."/>
            <person name="Jones S."/>
            <person name="Kagan R."/>
            <person name="King L.M."/>
            <person name="Leal B."/>
            <person name="Lebow H."/>
            <person name="Lee S."/>
            <person name="LeVan J.M."/>
            <person name="Lewis L.C."/>
            <person name="London P."/>
            <person name="Lorensuhewa L.M."/>
            <person name="Loulseged H."/>
            <person name="Lovett D.A."/>
            <person name="Lucier A."/>
            <person name="Lucier R.L."/>
            <person name="Ma J."/>
            <person name="Madu R.C."/>
            <person name="Mapua P."/>
            <person name="Martindale A.D."/>
            <person name="Martinez E."/>
            <person name="Massey E."/>
            <person name="Mawhiney S."/>
            <person name="Meador M.G."/>
            <person name="Mendez S."/>
            <person name="Mercado C."/>
            <person name="Mercado I.C."/>
            <person name="Merritt C.E."/>
            <person name="Miner Z.L."/>
            <person name="Minja E."/>
            <person name="Mitchell T."/>
            <person name="Mohabbat F."/>
            <person name="Mohabbat K."/>
            <person name="Montgomery B."/>
            <person name="Moore N."/>
            <person name="Morris S."/>
            <person name="Munidasa M."/>
            <person name="Ngo R.N."/>
            <person name="Nguyen N.B."/>
            <person name="Nickerson E."/>
            <person name="Nwaokelemeh O.O."/>
            <person name="Nwokenkwo S."/>
            <person name="Obregon M."/>
            <person name="Oguh M."/>
            <person name="Oragunye N."/>
            <person name="Oviedo R.J."/>
            <person name="Parish B.J."/>
            <person name="Parker D.N."/>
            <person name="Parrish J."/>
            <person name="Parks K.L."/>
            <person name="Paul H.A."/>
            <person name="Payton B.A."/>
            <person name="Perez A."/>
            <person name="Perrin W."/>
            <person name="Pickens A."/>
            <person name="Primus E.L."/>
            <person name="Pu L.-L."/>
            <person name="Puazo M."/>
            <person name="Quiles M.M."/>
            <person name="Quiroz J.B."/>
            <person name="Rabata D."/>
            <person name="Reeves K."/>
            <person name="Ruiz S.J."/>
            <person name="Shao H."/>
            <person name="Sisson I."/>
            <person name="Sonaike T."/>
            <person name="Sorelle R.P."/>
            <person name="Sutton A.E."/>
            <person name="Svatek A.F."/>
            <person name="Svetz L.A."/>
            <person name="Tamerisa K.S."/>
            <person name="Taylor T.R."/>
            <person name="Teague B."/>
            <person name="Thomas N."/>
            <person name="Thorn R.D."/>
            <person name="Trejos Z.Y."/>
            <person name="Trevino B.K."/>
            <person name="Ukegbu O.N."/>
            <person name="Urban J.B."/>
            <person name="Vasquez L.I."/>
            <person name="Vera V.A."/>
            <person name="Villasana D.M."/>
            <person name="Wang L."/>
            <person name="Ward-Moore S."/>
            <person name="Warren J.T."/>
            <person name="Wei X."/>
            <person name="White F."/>
            <person name="Williamson A.L."/>
            <person name="Wleczyk R."/>
            <person name="Wooden H.S."/>
            <person name="Wooden S.H."/>
            <person name="Yen J."/>
            <person name="Yoon L."/>
            <person name="Yoon V."/>
            <person name="Zorrilla S.E."/>
            <person name="Nelson D."/>
            <person name="Kucherlapati R."/>
            <person name="Weinstock G."/>
            <person name="Gibbs R.A."/>
        </authorList>
    </citation>
    <scope>NUCLEOTIDE SEQUENCE [LARGE SCALE GENOMIC DNA]</scope>
</reference>
<reference key="7">
    <citation type="journal article" date="2004" name="Genome Res.">
        <title>The status, quality, and expansion of the NIH full-length cDNA project: the Mammalian Gene Collection (MGC).</title>
        <authorList>
            <consortium name="The MGC Project Team"/>
        </authorList>
    </citation>
    <scope>NUCLEOTIDE SEQUENCE [LARGE SCALE MRNA] (ISOFORM ALPHA)</scope>
    <scope>VARIANT GLY-73</scope>
    <source>
        <tissue>Brain</tissue>
        <tissue>Testis</tissue>
    </source>
</reference>
<reference key="8">
    <citation type="journal article" date="1999" name="Nature">
        <title>Binding of paxillin to alpha4 integrins modifies integrin-dependent biological responses.</title>
        <authorList>
            <person name="Liu S."/>
            <person name="Thomas S.M."/>
            <person name="Woodside D.G."/>
            <person name="Rose D.M."/>
            <person name="Kiosses W.B."/>
            <person name="Pfaff M."/>
            <person name="Ginsberg M.H."/>
        </authorList>
    </citation>
    <scope>INTERACTION WITH ITGA4</scope>
</reference>
<reference key="9">
    <citation type="journal article" date="2000" name="Exp. Cell Res.">
        <title>Cell adhesion molecule CEACAM1 associates with paxillin in granulocytes and epithelial and endothelial cells.</title>
        <authorList>
            <person name="Ebrahimnejad A."/>
            <person name="Flayeh R."/>
            <person name="Unteregger G."/>
            <person name="Wagener C."/>
            <person name="Bruemmer J."/>
        </authorList>
    </citation>
    <scope>INTERACTION WITH CEACAM1</scope>
</reference>
<reference key="10">
    <citation type="journal article" date="2000" name="Mol. Cell. Biol.">
        <title>Coupling of PAK-interacting exchange factor PIX to GIT1 promotes focal complex disassembly.</title>
        <authorList>
            <person name="Zhao Z.-S."/>
            <person name="Manser E."/>
            <person name="Loo T.-H."/>
            <person name="Lim L."/>
        </authorList>
    </citation>
    <scope>INTERACTION WITH GIT1</scope>
</reference>
<reference key="11">
    <citation type="journal article" date="2000" name="Mol. Biol. Cell">
        <title>A new paxillin-binding protein, PAG3/Papalpha/KIAA0400, bearing an ADP-ribosylation factor GTPase-activating protein activity, is involved in paxillin recruitment to focal adhesions and cell migration.</title>
        <authorList>
            <person name="Kondo A."/>
            <person name="Hashimoto S."/>
            <person name="Yano H."/>
            <person name="Nagayama K."/>
            <person name="Mazaki Y."/>
            <person name="Sabe H."/>
        </authorList>
    </citation>
    <scope>INTERACTION WITH ASAP2</scope>
</reference>
<reference key="12">
    <citation type="journal article" date="2002" name="Int. J. Cancer">
        <title>Involvement of phosphorylation of Tyr-31 and Tyr-118 of paxillin in MM1 cancer cell migration.</title>
        <authorList>
            <person name="Iwasaki T."/>
            <person name="Nakata A."/>
            <person name="Mukai M."/>
            <person name="Shinkai K."/>
            <person name="Yano H."/>
            <person name="Sabe H."/>
            <person name="Schaefer E."/>
            <person name="Tatsuta M."/>
            <person name="Tsujimura T."/>
            <person name="Terada N."/>
            <person name="Kakishita E."/>
            <person name="Akedo H."/>
        </authorList>
    </citation>
    <scope>PHOSPHORYLATION AT TYR-31; TYR-118 AND TYR-181</scope>
</reference>
<reference key="13">
    <citation type="journal article" date="2003" name="Mol. Cell. Biol.">
        <title>RNF5, a RING finger protein that regulates cell motility by targeting paxillin ubiquitination and altered localization.</title>
        <authorList>
            <person name="Didier C."/>
            <person name="Broday L."/>
            <person name="Bhoumik A."/>
            <person name="Israeli S."/>
            <person name="Takahashi S."/>
            <person name="Nakayama K."/>
            <person name="Thomas S.M."/>
            <person name="Turner C.E."/>
            <person name="Henderson S."/>
            <person name="Sabe H."/>
            <person name="Ronai Z."/>
        </authorList>
    </citation>
    <scope>INTERACTION WITH RNF5</scope>
</reference>
<reference key="14">
    <citation type="journal article" date="2004" name="Mol. Cell. Biol.">
        <title>Brk activates rac1 and promotes cell migration and invasion by phosphorylating paxillin.</title>
        <authorList>
            <person name="Chen H.Y."/>
            <person name="Shen C.H."/>
            <person name="Tsai Y.T."/>
            <person name="Lin F.C."/>
            <person name="Huang Y.P."/>
            <person name="Chen R.H."/>
        </authorList>
    </citation>
    <scope>PHOSPHORYLATION AT TYR-31 AND TYR-118</scope>
    <scope>INTERACTION WITH PTK6</scope>
</reference>
<reference key="15">
    <citation type="journal article" date="2005" name="J. Biol. Chem.">
        <title>Actopaxin interacts with TESK1 to regulate cell spreading on fibronectin.</title>
        <authorList>
            <person name="LaLonde D.P."/>
            <person name="Brown M.C."/>
            <person name="Bouverat B.P."/>
            <person name="Turner C.E."/>
        </authorList>
    </citation>
    <scope>INTERACTION WITH PARVA AND ILK</scope>
</reference>
<reference key="16">
    <citation type="journal article" date="2005" name="Nat. Biotechnol.">
        <title>Immunoaffinity profiling of tyrosine phosphorylation in cancer cells.</title>
        <authorList>
            <person name="Rush J."/>
            <person name="Moritz A."/>
            <person name="Lee K.A."/>
            <person name="Guo A."/>
            <person name="Goss V.L."/>
            <person name="Spek E.J."/>
            <person name="Zhang H."/>
            <person name="Zha X.-M."/>
            <person name="Polakiewicz R.D."/>
            <person name="Comb M.J."/>
        </authorList>
    </citation>
    <scope>IDENTIFICATION BY MASS SPECTROMETRY [LARGE SCALE ANALYSIS]</scope>
</reference>
<reference key="17">
    <citation type="journal article" date="2006" name="Nat. Biotechnol.">
        <title>A probability-based approach for high-throughput protein phosphorylation analysis and site localization.</title>
        <authorList>
            <person name="Beausoleil S.A."/>
            <person name="Villen J."/>
            <person name="Gerber S.A."/>
            <person name="Rush J."/>
            <person name="Gygi S.P."/>
        </authorList>
    </citation>
    <scope>PHOSPHORYLATION [LARGE SCALE ANALYSIS] AT SER-106</scope>
    <scope>IDENTIFICATION BY MASS SPECTROMETRY [LARGE SCALE ANALYSIS]</scope>
    <source>
        <tissue>Cervix carcinoma</tissue>
    </source>
</reference>
<reference key="18">
    <citation type="journal article" date="2007" name="J. Cell Sci.">
        <title>Cdk5 regulates differentiation of oligodendrocyte precursor cells through the direct phosphorylation of paxillin.</title>
        <authorList>
            <person name="Miyamoto Y."/>
            <person name="Yamauchi J."/>
            <person name="Chan J.R."/>
            <person name="Okada A."/>
            <person name="Tomooka Y."/>
            <person name="Hisanaga S."/>
            <person name="Tanoue A."/>
        </authorList>
    </citation>
    <scope>PHOSPHORYLATION AT SER-244</scope>
</reference>
<reference key="19">
    <citation type="journal article" date="2007" name="Oncogene">
        <title>Nek3 kinase regulates prolactin-mediated cytoskeletal reorganization and motility of breast cancer cells.</title>
        <authorList>
            <person name="Miller S.L."/>
            <person name="Antico G."/>
            <person name="Raghunath P.N."/>
            <person name="Tomaszewski J.E."/>
            <person name="Clevenger C.V."/>
        </authorList>
    </citation>
    <scope>INTERACTION WITH NEK3</scope>
</reference>
<reference key="20">
    <citation type="journal article" date="2008" name="J. Proteome Res.">
        <title>Combining protein-based IMAC, peptide-based IMAC, and MudPIT for efficient phosphoproteomic analysis.</title>
        <authorList>
            <person name="Cantin G.T."/>
            <person name="Yi W."/>
            <person name="Lu B."/>
            <person name="Park S.K."/>
            <person name="Xu T."/>
            <person name="Lee J.-D."/>
            <person name="Yates J.R. III"/>
        </authorList>
    </citation>
    <scope>PHOSPHORYLATION [LARGE SCALE ANALYSIS] AT SER-106</scope>
    <scope>IDENTIFICATION BY MASS SPECTROMETRY [LARGE SCALE ANALYSIS]</scope>
    <source>
        <tissue>Cervix carcinoma</tissue>
    </source>
</reference>
<reference key="21">
    <citation type="journal article" date="2008" name="Mol. Cell">
        <title>Kinase-selective enrichment enables quantitative phosphoproteomics of the kinome across the cell cycle.</title>
        <authorList>
            <person name="Daub H."/>
            <person name="Olsen J.V."/>
            <person name="Bairlein M."/>
            <person name="Gnad F."/>
            <person name="Oppermann F.S."/>
            <person name="Korner R."/>
            <person name="Greff Z."/>
            <person name="Keri G."/>
            <person name="Stemmann O."/>
            <person name="Mann M."/>
        </authorList>
    </citation>
    <scope>IDENTIFICATION BY MASS SPECTROMETRY [LARGE SCALE ANALYSIS]</scope>
    <source>
        <tissue>Cervix carcinoma</tissue>
    </source>
</reference>
<reference key="22">
    <citation type="journal article" date="2008" name="Proc. Natl. Acad. Sci. U.S.A.">
        <title>A quantitative atlas of mitotic phosphorylation.</title>
        <authorList>
            <person name="Dephoure N."/>
            <person name="Zhou C."/>
            <person name="Villen J."/>
            <person name="Beausoleil S.A."/>
            <person name="Bakalarski C.E."/>
            <person name="Elledge S.J."/>
            <person name="Gygi S.P."/>
        </authorList>
    </citation>
    <scope>PHOSPHORYLATION [LARGE SCALE ANALYSIS] AT SER-85; SER-106; SER-126; SER-130; SER-137 AND SER-322</scope>
    <scope>IDENTIFICATION BY MASS SPECTROMETRY [LARGE SCALE ANALYSIS]</scope>
    <source>
        <tissue>Cervix carcinoma</tissue>
    </source>
</reference>
<reference key="23">
    <citation type="journal article" date="2009" name="Anal. Chem.">
        <title>Lys-N and trypsin cover complementary parts of the phosphoproteome in a refined SCX-based approach.</title>
        <authorList>
            <person name="Gauci S."/>
            <person name="Helbig A.O."/>
            <person name="Slijper M."/>
            <person name="Krijgsveld J."/>
            <person name="Heck A.J."/>
            <person name="Mohammed S."/>
        </authorList>
    </citation>
    <scope>ACETYLATION [LARGE SCALE ANALYSIS] AT MET-1</scope>
    <scope>IDENTIFICATION BY MASS SPECTROMETRY [LARGE SCALE ANALYSIS]</scope>
</reference>
<reference key="24">
    <citation type="journal article" date="2009" name="Mol. Cell. Proteomics">
        <title>Large-scale proteomics analysis of the human kinome.</title>
        <authorList>
            <person name="Oppermann F.S."/>
            <person name="Gnad F."/>
            <person name="Olsen J.V."/>
            <person name="Hornberger R."/>
            <person name="Greff Z."/>
            <person name="Keri G."/>
            <person name="Mann M."/>
            <person name="Daub H."/>
        </authorList>
    </citation>
    <scope>IDENTIFICATION BY MASS SPECTROMETRY [LARGE SCALE ANALYSIS]</scope>
</reference>
<reference key="25">
    <citation type="journal article" date="2009" name="Sci. Signal.">
        <title>Quantitative phosphoproteomic analysis of T cell receptor signaling reveals system-wide modulation of protein-protein interactions.</title>
        <authorList>
            <person name="Mayya V."/>
            <person name="Lundgren D.H."/>
            <person name="Hwang S.-I."/>
            <person name="Rezaul K."/>
            <person name="Wu L."/>
            <person name="Eng J.K."/>
            <person name="Rodionov V."/>
            <person name="Han D.K."/>
        </authorList>
    </citation>
    <scope>PHOSPHORYLATION [LARGE SCALE ANALYSIS] AT SER-85 AND SER-126</scope>
    <scope>IDENTIFICATION BY MASS SPECTROMETRY [LARGE SCALE ANALYSIS]</scope>
    <source>
        <tissue>Leukemic T-cell</tissue>
    </source>
</reference>
<reference key="26">
    <citation type="journal article" date="2010" name="J. Biol. Chem.">
        <title>Crystal structure of CCM3, a cerebral cavernous malformation protein critical for vascular integrity.</title>
        <authorList>
            <person name="Li X."/>
            <person name="Zhang R."/>
            <person name="Zhang H."/>
            <person name="He Y."/>
            <person name="Ji W."/>
            <person name="Min W."/>
            <person name="Boggon T.J."/>
        </authorList>
    </citation>
    <scope>INTERACTION WITH PDCD10</scope>
    <scope>SUBCELLULAR LOCATION</scope>
    <scope>MUTAGENESIS OF 7-LEU-LEU-8</scope>
</reference>
<reference key="27">
    <citation type="journal article" date="2010" name="Nat. Immunol.">
        <title>CD36 ligands promote sterile inflammation through assembly of a Toll-like receptor 4 and 6 heterodimer.</title>
        <authorList>
            <person name="Stewart C.R."/>
            <person name="Stuart L.M."/>
            <person name="Wilkinson K."/>
            <person name="van Gils J.M."/>
            <person name="Deng J."/>
            <person name="Halle A."/>
            <person name="Rayner K.J."/>
            <person name="Boyer L."/>
            <person name="Zhong R."/>
            <person name="Frazier W.A."/>
            <person name="Lacy-Hulbert A."/>
            <person name="El Khoury J."/>
            <person name="Golenbock D.T."/>
            <person name="Moore K.J."/>
        </authorList>
    </citation>
    <scope>INTERACTION WITH CD36</scope>
</reference>
<reference key="28">
    <citation type="journal article" date="2010" name="Sci. Signal.">
        <title>Quantitative phosphoproteomics reveals widespread full phosphorylation site occupancy during mitosis.</title>
        <authorList>
            <person name="Olsen J.V."/>
            <person name="Vermeulen M."/>
            <person name="Santamaria A."/>
            <person name="Kumar C."/>
            <person name="Miller M.L."/>
            <person name="Jensen L.J."/>
            <person name="Gnad F."/>
            <person name="Cox J."/>
            <person name="Jensen T.S."/>
            <person name="Nigg E.A."/>
            <person name="Brunak S."/>
            <person name="Mann M."/>
        </authorList>
    </citation>
    <scope>PHOSPHORYLATION [LARGE SCALE ANALYSIS] AT SER-85; SER-119 AND SER-126</scope>
    <scope>IDENTIFICATION BY MASS SPECTROMETRY [LARGE SCALE ANALYSIS]</scope>
    <source>
        <tissue>Cervix carcinoma</tissue>
    </source>
</reference>
<reference key="29">
    <citation type="journal article" date="2011" name="BMC Syst. Biol.">
        <title>Initial characterization of the human central proteome.</title>
        <authorList>
            <person name="Burkard T.R."/>
            <person name="Planyavsky M."/>
            <person name="Kaupe I."/>
            <person name="Breitwieser F.P."/>
            <person name="Buerckstuemmer T."/>
            <person name="Bennett K.L."/>
            <person name="Superti-Furga G."/>
            <person name="Colinge J."/>
        </authorList>
    </citation>
    <scope>IDENTIFICATION BY MASS SPECTROMETRY [LARGE SCALE ANALYSIS]</scope>
</reference>
<reference key="30">
    <citation type="journal article" date="2011" name="Sci. Signal.">
        <title>System-wide temporal characterization of the proteome and phosphoproteome of human embryonic stem cell differentiation.</title>
        <authorList>
            <person name="Rigbolt K.T."/>
            <person name="Prokhorova T.A."/>
            <person name="Akimov V."/>
            <person name="Henningsen J."/>
            <person name="Johansen P.T."/>
            <person name="Kratchmarova I."/>
            <person name="Kassem M."/>
            <person name="Mann M."/>
            <person name="Olsen J.V."/>
            <person name="Blagoev B."/>
        </authorList>
    </citation>
    <scope>PHOSPHORYLATION [LARGE SCALE ANALYSIS] AT SER-126</scope>
    <scope>IDENTIFICATION BY MASS SPECTROMETRY [LARGE SCALE ANALYSIS]</scope>
</reference>
<reference key="31">
    <citation type="journal article" date="2012" name="Proc. Natl. Acad. Sci. U.S.A.">
        <title>N-terminal acetylome analyses and functional insights of the N-terminal acetyltransferase NatB.</title>
        <authorList>
            <person name="Van Damme P."/>
            <person name="Lasa M."/>
            <person name="Polevoda B."/>
            <person name="Gazquez C."/>
            <person name="Elosegui-Artola A."/>
            <person name="Kim D.S."/>
            <person name="De Juan-Pardo E."/>
            <person name="Demeyer K."/>
            <person name="Hole K."/>
            <person name="Larrea E."/>
            <person name="Timmerman E."/>
            <person name="Prieto J."/>
            <person name="Arnesen T."/>
            <person name="Sherman F."/>
            <person name="Gevaert K."/>
            <person name="Aldabe R."/>
        </authorList>
    </citation>
    <scope>ACETYLATION [LARGE SCALE ANALYSIS] AT SER-2 (ISOFORM 4)</scope>
    <scope>CLEAVAGE OF INITIATOR METHIONINE [LARGE SCALE ANALYSIS] (ISOFORM 4)</scope>
    <scope>IDENTIFICATION BY MASS SPECTROMETRY [LARGE SCALE ANALYSIS]</scope>
</reference>
<reference key="32">
    <citation type="journal article" date="2013" name="J. Proteome Res.">
        <title>Toward a comprehensive characterization of a human cancer cell phosphoproteome.</title>
        <authorList>
            <person name="Zhou H."/>
            <person name="Di Palma S."/>
            <person name="Preisinger C."/>
            <person name="Peng M."/>
            <person name="Polat A.N."/>
            <person name="Heck A.J."/>
            <person name="Mohammed S."/>
        </authorList>
    </citation>
    <scope>PHOSPHORYLATION [LARGE SCALE ANALYSIS] AT SER-126; SER-272 AND SER-303</scope>
    <scope>IDENTIFICATION BY MASS SPECTROMETRY [LARGE SCALE ANALYSIS]</scope>
    <source>
        <tissue>Cervix carcinoma</tissue>
        <tissue>Erythroleukemia</tissue>
    </source>
</reference>
<reference key="33">
    <citation type="journal article" date="2013" name="Oncogene">
        <title>SLK-mediated phosphorylation of paxillin is required for focal adhesion turnover and cell migration.</title>
        <authorList>
            <person name="Quizi J.L."/>
            <person name="Baron K."/>
            <person name="Al-Zahrani K.N."/>
            <person name="O'Reilly P."/>
            <person name="Sriram R.K."/>
            <person name="Conway J."/>
            <person name="Laurin A.A."/>
            <person name="Sabourin L.A."/>
        </authorList>
    </citation>
    <scope>PHOSPHORYLATION AT SER-250</scope>
    <scope>SUBCELLULAR LOCATION</scope>
</reference>
<reference key="34">
    <citation type="journal article" date="2014" name="J. Cell Sci.">
        <title>TRIM15 is a focal adhesion protein that regulates focal adhesion disassembly.</title>
        <authorList>
            <person name="Uchil P.D."/>
            <person name="Pawliczek T."/>
            <person name="Reynolds T.D."/>
            <person name="Ding S."/>
            <person name="Hinz A."/>
            <person name="Munro J.B."/>
            <person name="Huang F."/>
            <person name="Floyd R.W."/>
            <person name="Yang H."/>
            <person name="Hamilton W.L."/>
            <person name="Bewersdorf J."/>
            <person name="Xiong Y."/>
            <person name="Calderwood D.A."/>
            <person name="Mothes W."/>
        </authorList>
    </citation>
    <scope>FUNCTION</scope>
    <scope>INTERACTION WITH TRIM15</scope>
    <scope>SUBCELLULAR LOCATION</scope>
</reference>
<reference key="35">
    <citation type="journal article" date="2014" name="J. Proteomics">
        <title>An enzyme assisted RP-RPLC approach for in-depth analysis of human liver phosphoproteome.</title>
        <authorList>
            <person name="Bian Y."/>
            <person name="Song C."/>
            <person name="Cheng K."/>
            <person name="Dong M."/>
            <person name="Wang F."/>
            <person name="Huang J."/>
            <person name="Sun D."/>
            <person name="Wang L."/>
            <person name="Ye M."/>
            <person name="Zou H."/>
        </authorList>
    </citation>
    <scope>PHOSPHORYLATION [LARGE SCALE ANALYSIS] AT SER-85; SER-143 AND SER-533</scope>
    <scope>IDENTIFICATION BY MASS SPECTROMETRY [LARGE SCALE ANALYSIS]</scope>
    <source>
        <tissue>Liver</tissue>
    </source>
</reference>
<reference key="36">
    <citation type="journal article" date="2014" name="Kidney Int.">
        <title>Epithelial protein lost in neoplasm modulates platelet-derived growth factor-mediated adhesion and motility of mesangial cells.</title>
        <authorList>
            <person name="Tsurumi H."/>
            <person name="Harita Y."/>
            <person name="Kurihara H."/>
            <person name="Kosako H."/>
            <person name="Hayashi K."/>
            <person name="Matsunaga A."/>
            <person name="Kajiho Y."/>
            <person name="Kanda S."/>
            <person name="Miura K."/>
            <person name="Sekine T."/>
            <person name="Oka A."/>
            <person name="Ishizuka K."/>
            <person name="Horita S."/>
            <person name="Hattori M."/>
            <person name="Hattori S."/>
            <person name="Igarashi T."/>
        </authorList>
    </citation>
    <scope>INTERACTION WITH LIMA1</scope>
</reference>
<reference key="37">
    <citation type="journal article" date="2015" name="J. Cell Biol.">
        <title>PAK4 promotes kinase-independent stabilization of RhoU to modulate cell adhesion.</title>
        <authorList>
            <person name="Dart A.E."/>
            <person name="Box G.M."/>
            <person name="Court W."/>
            <person name="Gale M.E."/>
            <person name="Brown J.P."/>
            <person name="Pinder S.E."/>
            <person name="Eccles S.A."/>
            <person name="Wells C.M."/>
        </authorList>
    </citation>
    <scope>PHOSPHORYLATION AT SER-272</scope>
    <scope>INTERACTION WITH PAK4</scope>
</reference>
<reference key="38">
    <citation type="journal article" date="2023" name="Life. Sci Alliance">
        <title>N-terminal proteoforms may engage in different protein complexes.</title>
        <authorList>
            <person name="Bogaert A."/>
            <person name="Fijalkowska D."/>
            <person name="Staes A."/>
            <person name="Van de Steene T."/>
            <person name="Vuylsteke M."/>
            <person name="Stadler C."/>
            <person name="Eyckerman S."/>
            <person name="Spirohn K."/>
            <person name="Hao T."/>
            <person name="Calderwood M.A."/>
            <person name="Gevaert K."/>
        </authorList>
    </citation>
    <scope>ACETYLATION AT MET-1 (ISOFORM 1)</scope>
    <scope>CLEAVAGE OF INITIATOR METHIONINE (ISOFORM 4)</scope>
    <scope>ACETYLATION AT SER-2 (ISOFORM 4)</scope>
</reference>
<reference key="39">
    <citation type="journal article" date="2003" name="Structure">
        <title>Molecular recognition of paxillin LD motifs by the focal adhesion targeting domain.</title>
        <authorList>
            <person name="Hoellerer M.K."/>
            <person name="Noble M.E."/>
            <person name="Labesse G."/>
            <person name="Campbell I.D."/>
            <person name="Werner J.M."/>
            <person name="Arold S.T."/>
        </authorList>
    </citation>
    <scope>X-RAY CRYSTALLOGRAPHY (2.35 ANGSTROMS) OF 262-274 IN COMPLEX WITH PTK2/FAK1</scope>
    <scope>INTERACTION WITH PTK2/FAK1</scope>
</reference>
<reference key="40">
    <citation type="journal article" date="2007" name="J. Mol. Biol.">
        <title>Paxillin and ponsin interact in nascent costameres of muscle cells.</title>
        <authorList>
            <person name="Gehmlich K."/>
            <person name="Pinotsis N."/>
            <person name="Hayess K."/>
            <person name="van der Ven P.F."/>
            <person name="Milting H."/>
            <person name="El Banayosy A."/>
            <person name="Korfer R."/>
            <person name="Wilmanns M."/>
            <person name="Ehler E."/>
            <person name="Furst D.O."/>
        </authorList>
    </citation>
    <scope>X-RAY CRYSTALLOGRAPHY (1.63 ANGSTROMS) OF 45-54 IN COMPLEX WITH SORBS1</scope>
    <scope>INTERACTION WITH SORBS1</scope>
</reference>
<reference key="41">
    <citation type="journal article" date="2008" name="J. Biol. Chem.">
        <title>The structure of alpha-parvin CH2-paxillin LD1 complex reveals a novel modular recognition for focal adhesion assembly.</title>
        <authorList>
            <person name="Wang X."/>
            <person name="Fukuda K."/>
            <person name="Byeon I.J."/>
            <person name="Velyvis A."/>
            <person name="Wu C."/>
            <person name="Gronenborn A."/>
            <person name="Qin J."/>
        </authorList>
    </citation>
    <scope>STRUCTURE BY NMR OF 244-372 IN COMPLEX WITH PARVA</scope>
    <scope>INTERACTION WITH PARVA</scope>
</reference>
<reference key="42">
    <citation type="journal article" date="2008" name="Structure">
        <title>Structural analysis of the interactions between paxillin LD motifs and alpha-parvin.</title>
        <authorList>
            <person name="Lorenz S."/>
            <person name="Vakonakis I."/>
            <person name="Lowe E.D."/>
            <person name="Campbell I.D."/>
            <person name="Noble M.E."/>
            <person name="Hoellerer M.K."/>
        </authorList>
    </citation>
    <scope>X-RAY CRYSTALLOGRAPHY (1.8 ANGSTROMS) OF 1-315 IN COMPLEX WITH PARVA</scope>
    <scope>INTERACTION WITH PARVA</scope>
</reference>
<reference key="43">
    <citation type="journal article" date="2009" name="Biochem. Biophys. Res. Commun.">
        <title>Crystal structures of free and ligand-bound focal adhesion targeting domain of Pyk2.</title>
        <authorList>
            <person name="Lulo J."/>
            <person name="Yuzawa S."/>
            <person name="Schlessinger J."/>
        </authorList>
    </citation>
    <scope>X-RAY CRYSTALLOGRAPHY (2.95 ANGSTROMS) OF 262-274 IN COMPLEX WITH PTK2B/PYK2</scope>
    <scope>INTERACTION WITH PTK2B/PYK2</scope>
</reference>
<reference key="44">
    <citation type="journal article" date="2012" name="J. Biol. Chem.">
        <title>Structural basis for paxillin binding and focal adhesion targeting of beta-parvin.</title>
        <authorList>
            <person name="Stiegler A.L."/>
            <person name="Draheim K.M."/>
            <person name="Li X."/>
            <person name="Chayen N.E."/>
            <person name="Calderwood D.A."/>
            <person name="Boggon T.J."/>
        </authorList>
    </citation>
    <scope>X-RAY CRYSTALLOGRAPHY (2.9 ANGSTROMS) OF 1-20 IN COMPLEX WITH PARVB</scope>
    <scope>INTERACTION WITH PARVB</scope>
</reference>